<gene>
    <name type="primary">CAMK2B</name>
    <name type="synonym">CAM2</name>
    <name type="synonym">CAMK2</name>
    <name type="synonym">CAMKB</name>
</gene>
<name>KCC2B_HUMAN</name>
<accession>Q13554</accession>
<accession>A4D2K0</accession>
<accession>A4D2K1</accession>
<accession>A4D2K2</accession>
<accession>A4D2K3</accession>
<accession>A4D2K4</accession>
<accession>A4D2K5</accession>
<accession>A4D2K6</accession>
<accession>O95437</accession>
<accession>O95438</accession>
<accession>O95599</accession>
<accession>Q9UGH7</accession>
<accession>Q9UGH8</accession>
<accession>Q9UGH9</accession>
<accession>Q9UNX0</accession>
<accession>Q9UNX7</accession>
<accession>Q9UP00</accession>
<accession>Q9Y5N4</accession>
<accession>Q9Y6F4</accession>
<evidence type="ECO:0000250" key="1"/>
<evidence type="ECO:0000250" key="2">
    <source>
        <dbReference type="UniProtKB" id="P08413"/>
    </source>
</evidence>
<evidence type="ECO:0000250" key="3">
    <source>
        <dbReference type="UniProtKB" id="P28652"/>
    </source>
</evidence>
<evidence type="ECO:0000255" key="4">
    <source>
        <dbReference type="PROSITE-ProRule" id="PRU00159"/>
    </source>
</evidence>
<evidence type="ECO:0000255" key="5">
    <source>
        <dbReference type="PROSITE-ProRule" id="PRU10027"/>
    </source>
</evidence>
<evidence type="ECO:0000256" key="6">
    <source>
        <dbReference type="SAM" id="MobiDB-lite"/>
    </source>
</evidence>
<evidence type="ECO:0000269" key="7">
    <source>
    </source>
</evidence>
<evidence type="ECO:0000269" key="8">
    <source>
    </source>
</evidence>
<evidence type="ECO:0000269" key="9">
    <source>
    </source>
</evidence>
<evidence type="ECO:0000269" key="10">
    <source>
    </source>
</evidence>
<evidence type="ECO:0000269" key="11">
    <source>
    </source>
</evidence>
<evidence type="ECO:0000269" key="12">
    <source>
    </source>
</evidence>
<evidence type="ECO:0000269" key="13">
    <source>
    </source>
</evidence>
<evidence type="ECO:0000269" key="14">
    <source>
    </source>
</evidence>
<evidence type="ECO:0000269" key="15">
    <source ref="20"/>
</evidence>
<evidence type="ECO:0000303" key="16">
    <source>
    </source>
</evidence>
<evidence type="ECO:0000303" key="17">
    <source>
    </source>
</evidence>
<evidence type="ECO:0000303" key="18">
    <source>
    </source>
</evidence>
<evidence type="ECO:0000303" key="19">
    <source>
    </source>
</evidence>
<evidence type="ECO:0000303" key="20">
    <source>
    </source>
</evidence>
<evidence type="ECO:0000303" key="21">
    <source ref="3"/>
</evidence>
<evidence type="ECO:0000305" key="22"/>
<evidence type="ECO:0007744" key="23">
    <source>
    </source>
</evidence>
<evidence type="ECO:0007829" key="24">
    <source>
        <dbReference type="PDB" id="3BHH"/>
    </source>
</evidence>
<evidence type="ECO:0007829" key="25">
    <source>
        <dbReference type="PDB" id="7URY"/>
    </source>
</evidence>
<proteinExistence type="evidence at protein level"/>
<organism>
    <name type="scientific">Homo sapiens</name>
    <name type="common">Human</name>
    <dbReference type="NCBI Taxonomy" id="9606"/>
    <lineage>
        <taxon>Eukaryota</taxon>
        <taxon>Metazoa</taxon>
        <taxon>Chordata</taxon>
        <taxon>Craniata</taxon>
        <taxon>Vertebrata</taxon>
        <taxon>Euteleostomi</taxon>
        <taxon>Mammalia</taxon>
        <taxon>Eutheria</taxon>
        <taxon>Euarchontoglires</taxon>
        <taxon>Primates</taxon>
        <taxon>Haplorrhini</taxon>
        <taxon>Catarrhini</taxon>
        <taxon>Hominidae</taxon>
        <taxon>Homo</taxon>
    </lineage>
</organism>
<reference key="1">
    <citation type="journal article" date="2000" name="FEBS Lett.">
        <title>Identification of alternative splicing variants of the beta subunit of human Ca(2+)/calmodulin-dependent protein kinase II with different activities.</title>
        <authorList>
            <person name="Wang P."/>
            <person name="Wu Y."/>
            <person name="Zhou T.H."/>
            <person name="Sun Y."/>
            <person name="Pei G."/>
        </authorList>
    </citation>
    <scope>NUCLEOTIDE SEQUENCE [MRNA] (ISOFORMS 1; 2; 5; 6 AND 7)</scope>
    <source>
        <tissue>Brain</tissue>
    </source>
</reference>
<reference key="2">
    <citation type="submission" date="1995-03" db="EMBL/GenBank/DDBJ databases">
        <authorList>
            <person name="Leddy J.J."/>
            <person name="Salih M."/>
            <person name="Tuana B.S."/>
        </authorList>
    </citation>
    <scope>NUCLEOTIDE SEQUENCE [MRNA] (ISOFORM 4)</scope>
    <source>
        <tissue>Skeletal muscle</tissue>
    </source>
</reference>
<reference key="3">
    <citation type="submission" date="1998-12" db="EMBL/GenBank/DDBJ databases">
        <title>Molecular cloning and sequencing of human calcium/calmodulin dependent protein kinase II beta subunit.</title>
        <authorList>
            <person name="Li G.Y."/>
            <person name="Cooper N.G.F."/>
        </authorList>
    </citation>
    <scope>NUCLEOTIDE SEQUENCE [MRNA] (ISOFORMS 1 AND 5)</scope>
    <source>
        <tissue>Brain</tissue>
    </source>
</reference>
<reference key="4">
    <citation type="journal article" date="2000" name="Diabetologia">
        <title>Cloning and quantitative determination of the human Ca2+/calmodulin-dependent protein kinase II (CaMK II) isoforms in human beta cells.</title>
        <authorList>
            <person name="Rochlitz H."/>
            <person name="Voigt A."/>
            <person name="Lankat-Buttgereit B."/>
            <person name="Goeke B."/>
            <person name="Heimberg H."/>
            <person name="Nauck M.A."/>
            <person name="Schiemann U."/>
            <person name="Schatz H."/>
            <person name="Pfeiffer A.F."/>
        </authorList>
    </citation>
    <scope>NUCLEOTIDE SEQUENCE [MRNA] (ISOFORMS 2; 3 AND 5)</scope>
    <source>
        <tissue>Insulinoma</tissue>
    </source>
</reference>
<reference key="5">
    <citation type="journal article" date="2004" name="Nat. Genet.">
        <title>Complete sequencing and characterization of 21,243 full-length human cDNAs.</title>
        <authorList>
            <person name="Ota T."/>
            <person name="Suzuki Y."/>
            <person name="Nishikawa T."/>
            <person name="Otsuki T."/>
            <person name="Sugiyama T."/>
            <person name="Irie R."/>
            <person name="Wakamatsu A."/>
            <person name="Hayashi K."/>
            <person name="Sato H."/>
            <person name="Nagai K."/>
            <person name="Kimura K."/>
            <person name="Makita H."/>
            <person name="Sekine M."/>
            <person name="Obayashi M."/>
            <person name="Nishi T."/>
            <person name="Shibahara T."/>
            <person name="Tanaka T."/>
            <person name="Ishii S."/>
            <person name="Yamamoto J."/>
            <person name="Saito K."/>
            <person name="Kawai Y."/>
            <person name="Isono Y."/>
            <person name="Nakamura Y."/>
            <person name="Nagahari K."/>
            <person name="Murakami K."/>
            <person name="Yasuda T."/>
            <person name="Iwayanagi T."/>
            <person name="Wagatsuma M."/>
            <person name="Shiratori A."/>
            <person name="Sudo H."/>
            <person name="Hosoiri T."/>
            <person name="Kaku Y."/>
            <person name="Kodaira H."/>
            <person name="Kondo H."/>
            <person name="Sugawara M."/>
            <person name="Takahashi M."/>
            <person name="Kanda K."/>
            <person name="Yokoi T."/>
            <person name="Furuya T."/>
            <person name="Kikkawa E."/>
            <person name="Omura Y."/>
            <person name="Abe K."/>
            <person name="Kamihara K."/>
            <person name="Katsuta N."/>
            <person name="Sato K."/>
            <person name="Tanikawa M."/>
            <person name="Yamazaki M."/>
            <person name="Ninomiya K."/>
            <person name="Ishibashi T."/>
            <person name="Yamashita H."/>
            <person name="Murakawa K."/>
            <person name="Fujimori K."/>
            <person name="Tanai H."/>
            <person name="Kimata M."/>
            <person name="Watanabe M."/>
            <person name="Hiraoka S."/>
            <person name="Chiba Y."/>
            <person name="Ishida S."/>
            <person name="Ono Y."/>
            <person name="Takiguchi S."/>
            <person name="Watanabe S."/>
            <person name="Yosida M."/>
            <person name="Hotuta T."/>
            <person name="Kusano J."/>
            <person name="Kanehori K."/>
            <person name="Takahashi-Fujii A."/>
            <person name="Hara H."/>
            <person name="Tanase T.-O."/>
            <person name="Nomura Y."/>
            <person name="Togiya S."/>
            <person name="Komai F."/>
            <person name="Hara R."/>
            <person name="Takeuchi K."/>
            <person name="Arita M."/>
            <person name="Imose N."/>
            <person name="Musashino K."/>
            <person name="Yuuki H."/>
            <person name="Oshima A."/>
            <person name="Sasaki N."/>
            <person name="Aotsuka S."/>
            <person name="Yoshikawa Y."/>
            <person name="Matsunawa H."/>
            <person name="Ichihara T."/>
            <person name="Shiohata N."/>
            <person name="Sano S."/>
            <person name="Moriya S."/>
            <person name="Momiyama H."/>
            <person name="Satoh N."/>
            <person name="Takami S."/>
            <person name="Terashima Y."/>
            <person name="Suzuki O."/>
            <person name="Nakagawa S."/>
            <person name="Senoh A."/>
            <person name="Mizoguchi H."/>
            <person name="Goto Y."/>
            <person name="Shimizu F."/>
            <person name="Wakebe H."/>
            <person name="Hishigaki H."/>
            <person name="Watanabe T."/>
            <person name="Sugiyama A."/>
            <person name="Takemoto M."/>
            <person name="Kawakami B."/>
            <person name="Yamazaki M."/>
            <person name="Watanabe K."/>
            <person name="Kumagai A."/>
            <person name="Itakura S."/>
            <person name="Fukuzumi Y."/>
            <person name="Fujimori Y."/>
            <person name="Komiyama M."/>
            <person name="Tashiro H."/>
            <person name="Tanigami A."/>
            <person name="Fujiwara T."/>
            <person name="Ono T."/>
            <person name="Yamada K."/>
            <person name="Fujii Y."/>
            <person name="Ozaki K."/>
            <person name="Hirao M."/>
            <person name="Ohmori Y."/>
            <person name="Kawabata A."/>
            <person name="Hikiji T."/>
            <person name="Kobatake N."/>
            <person name="Inagaki H."/>
            <person name="Ikema Y."/>
            <person name="Okamoto S."/>
            <person name="Okitani R."/>
            <person name="Kawakami T."/>
            <person name="Noguchi S."/>
            <person name="Itoh T."/>
            <person name="Shigeta K."/>
            <person name="Senba T."/>
            <person name="Matsumura K."/>
            <person name="Nakajima Y."/>
            <person name="Mizuno T."/>
            <person name="Morinaga M."/>
            <person name="Sasaki M."/>
            <person name="Togashi T."/>
            <person name="Oyama M."/>
            <person name="Hata H."/>
            <person name="Watanabe M."/>
            <person name="Komatsu T."/>
            <person name="Mizushima-Sugano J."/>
            <person name="Satoh T."/>
            <person name="Shirai Y."/>
            <person name="Takahashi Y."/>
            <person name="Nakagawa K."/>
            <person name="Okumura K."/>
            <person name="Nagase T."/>
            <person name="Nomura N."/>
            <person name="Kikuchi H."/>
            <person name="Masuho Y."/>
            <person name="Yamashita R."/>
            <person name="Nakai K."/>
            <person name="Yada T."/>
            <person name="Nakamura Y."/>
            <person name="Ohara O."/>
            <person name="Isogai T."/>
            <person name="Sugano S."/>
        </authorList>
    </citation>
    <scope>NUCLEOTIDE SEQUENCE [LARGE SCALE MRNA] (ISOFORMS 1 AND 2)</scope>
    <source>
        <tissue>Testis</tissue>
        <tissue>Thalamus</tissue>
    </source>
</reference>
<reference key="6">
    <citation type="journal article" date="2003" name="Science">
        <title>Human chromosome 7: DNA sequence and biology.</title>
        <authorList>
            <person name="Scherer S.W."/>
            <person name="Cheung J."/>
            <person name="MacDonald J.R."/>
            <person name="Osborne L.R."/>
            <person name="Nakabayashi K."/>
            <person name="Herbrick J.-A."/>
            <person name="Carson A.R."/>
            <person name="Parker-Katiraee L."/>
            <person name="Skaug J."/>
            <person name="Khaja R."/>
            <person name="Zhang J."/>
            <person name="Hudek A.K."/>
            <person name="Li M."/>
            <person name="Haddad M."/>
            <person name="Duggan G.E."/>
            <person name="Fernandez B.A."/>
            <person name="Kanematsu E."/>
            <person name="Gentles S."/>
            <person name="Christopoulos C.C."/>
            <person name="Choufani S."/>
            <person name="Kwasnicka D."/>
            <person name="Zheng X.H."/>
            <person name="Lai Z."/>
            <person name="Nusskern D.R."/>
            <person name="Zhang Q."/>
            <person name="Gu Z."/>
            <person name="Lu F."/>
            <person name="Zeesman S."/>
            <person name="Nowaczyk M.J."/>
            <person name="Teshima I."/>
            <person name="Chitayat D."/>
            <person name="Shuman C."/>
            <person name="Weksberg R."/>
            <person name="Zackai E.H."/>
            <person name="Grebe T.A."/>
            <person name="Cox S.R."/>
            <person name="Kirkpatrick S.J."/>
            <person name="Rahman N."/>
            <person name="Friedman J.M."/>
            <person name="Heng H.H.Q."/>
            <person name="Pelicci P.G."/>
            <person name="Lo-Coco F."/>
            <person name="Belloni E."/>
            <person name="Shaffer L.G."/>
            <person name="Pober B."/>
            <person name="Morton C.C."/>
            <person name="Gusella J.F."/>
            <person name="Bruns G.A.P."/>
            <person name="Korf B.R."/>
            <person name="Quade B.J."/>
            <person name="Ligon A.H."/>
            <person name="Ferguson H."/>
            <person name="Higgins A.W."/>
            <person name="Leach N.T."/>
            <person name="Herrick S.R."/>
            <person name="Lemyre E."/>
            <person name="Farra C.G."/>
            <person name="Kim H.-G."/>
            <person name="Summers A.M."/>
            <person name="Gripp K.W."/>
            <person name="Roberts W."/>
            <person name="Szatmari P."/>
            <person name="Winsor E.J.T."/>
            <person name="Grzeschik K.-H."/>
            <person name="Teebi A."/>
            <person name="Minassian B.A."/>
            <person name="Kere J."/>
            <person name="Armengol L."/>
            <person name="Pujana M.A."/>
            <person name="Estivill X."/>
            <person name="Wilson M.D."/>
            <person name="Koop B.F."/>
            <person name="Tosi S."/>
            <person name="Moore G.E."/>
            <person name="Boright A.P."/>
            <person name="Zlotorynski E."/>
            <person name="Kerem B."/>
            <person name="Kroisel P.M."/>
            <person name="Petek E."/>
            <person name="Oscier D.G."/>
            <person name="Mould S.J."/>
            <person name="Doehner H."/>
            <person name="Doehner K."/>
            <person name="Rommens J.M."/>
            <person name="Vincent J.B."/>
            <person name="Venter J.C."/>
            <person name="Li P.W."/>
            <person name="Mural R.J."/>
            <person name="Adams M.D."/>
            <person name="Tsui L.-C."/>
        </authorList>
    </citation>
    <scope>NUCLEOTIDE SEQUENCE [LARGE SCALE GENOMIC DNA]</scope>
</reference>
<reference key="7">
    <citation type="journal article" date="2004" name="Genome Res.">
        <title>The status, quality, and expansion of the NIH full-length cDNA project: the Mammalian Gene Collection (MGC).</title>
        <authorList>
            <consortium name="The MGC Project Team"/>
        </authorList>
    </citation>
    <scope>NUCLEOTIDE SEQUENCE [LARGE SCALE MRNA] (ISOFORM 2)</scope>
    <source>
        <tissue>Lung</tissue>
    </source>
</reference>
<reference key="8">
    <citation type="journal article" date="1997" name="Biochim. Biophys. Acta">
        <title>Identification of novel human tumor cell-specific CaMK-II variants.</title>
        <authorList>
            <person name="Tombes R.M."/>
            <person name="Krystal G.W."/>
        </authorList>
    </citation>
    <scope>NUCLEOTIDE SEQUENCE [MRNA] OF 302-605 (ISOFORM 2)</scope>
</reference>
<reference key="9">
    <citation type="journal article" date="2004" name="J. Biol. Chem.">
        <title>Comparative analyses of the three-dimensional structures and enzymatic properties of alpha, beta, gamma and delta isoforms of Ca2+-calmodulin-dependent protein kinase II.</title>
        <authorList>
            <person name="Gaertner T.R."/>
            <person name="Kolodziej S.J."/>
            <person name="Wang D."/>
            <person name="Kobayashi R."/>
            <person name="Koomen J.M."/>
            <person name="Stoops J.K."/>
            <person name="Waxham M.N."/>
        </authorList>
    </citation>
    <scope>ACTIVITY REGULATION</scope>
    <scope>SUBUNIT</scope>
    <scope>AUTOPHOSPHORYLATION</scope>
</reference>
<reference key="10">
    <citation type="journal article" date="2004" name="Neuron">
        <title>SynGAP-MUPP1-CaMKII synaptic complexes regulate p38 MAP kinase activity and NMDA receptor-dependent synaptic AMPA receptor potentiation.</title>
        <authorList>
            <person name="Krapivinsky G."/>
            <person name="Medina I."/>
            <person name="Krapivinsky L."/>
            <person name="Gapon S."/>
            <person name="Clapham D.E."/>
        </authorList>
    </citation>
    <scope>INTERACTION WITH MPDZ</scope>
</reference>
<reference key="11">
    <citation type="journal article" date="2006" name="J. Physiol. (Lond.)">
        <title>Ca2+-calmodulin-dependent protein kinase expression and signalling in skeletal muscle during exercise.</title>
        <authorList>
            <person name="Rose A.J."/>
            <person name="Kiens B."/>
            <person name="Richter E.A."/>
        </authorList>
    </citation>
    <scope>FUNCTION IN SKELETAL MUSCLE</scope>
    <scope>PHOSPHORYLATION AT THR-287</scope>
    <scope>FUNCTION IN PHOSPHORYLATION OF PLN</scope>
    <scope>TISSUE SPECIFICITY</scope>
    <scope>INDUCTION</scope>
</reference>
<reference key="12">
    <citation type="journal article" date="2009" name="Mol. Cell. Proteomics">
        <title>Large-scale proteomics analysis of the human kinome.</title>
        <authorList>
            <person name="Oppermann F.S."/>
            <person name="Gnad F."/>
            <person name="Olsen J.V."/>
            <person name="Hornberger R."/>
            <person name="Greff Z."/>
            <person name="Keri G."/>
            <person name="Mann M."/>
            <person name="Daub H."/>
        </authorList>
    </citation>
    <scope>IDENTIFICATION BY MASS SPECTROMETRY [LARGE SCALE ANALYSIS]</scope>
</reference>
<reference key="13">
    <citation type="journal article" date="2011" name="Cell Calcium">
        <title>Analysis of CaM-kinase signaling in cells.</title>
        <authorList>
            <person name="Wayman G.A."/>
            <person name="Tokumitsu H."/>
            <person name="Davare M.A."/>
            <person name="Soderling T.R."/>
        </authorList>
    </citation>
    <scope>SUBCELLULAR LOCATION</scope>
</reference>
<reference key="14">
    <citation type="journal article" date="2004" name="Proc. Nutr. Soc.">
        <title>The role of calcium and calcium/calmodulin-dependent kinases in skeletal muscle plasticity and mitochondrial biogenesis.</title>
        <authorList>
            <person name="Chin E.R."/>
        </authorList>
    </citation>
    <scope>REVIEW ON FUNCTION IN SKELETAL MUSCLE</scope>
</reference>
<reference key="15">
    <citation type="journal article" date="2005" name="Basic Appl. Myol.">
        <title>The Ca2+-calmodulin dependent protein kinase II system of skeletal muscle sarcoplasmic reticulum.</title>
        <authorList>
            <person name="Sacchetto R."/>
            <person name="Bovo E."/>
            <person name="Damiani E."/>
        </authorList>
    </citation>
    <scope>REVIEW ON FUNCTION IN SKELETAL MUSCLE</scope>
</reference>
<reference key="16">
    <citation type="journal article" date="2008" name="Neuron">
        <title>Calmodulin-kinases: modulators of neuronal development and plasticity.</title>
        <authorList>
            <person name="Wayman G.A."/>
            <person name="Lee Y.S."/>
            <person name="Tokumitsu H."/>
            <person name="Silva A.J."/>
            <person name="Silva A."/>
            <person name="Soderling T.R."/>
        </authorList>
    </citation>
    <scope>REVIEW ON FUNCTION IN NEURONAL PLASTICITY</scope>
</reference>
<reference key="17">
    <citation type="journal article" date="2009" name="Physiology (Bethesda)">
        <title>The roles of CaMKII and F-actin in the structural plasticity of dendritic spines: a potential molecular identity of a synaptic tag?</title>
        <authorList>
            <person name="Okamoto K."/>
            <person name="Bosch M."/>
            <person name="Hayashi Y."/>
        </authorList>
    </citation>
    <scope>REVIEW ON FUNCTION IN NEURONAL PLASTICITY</scope>
</reference>
<reference key="18">
    <citation type="journal article" date="2014" name="J. Proteomics">
        <title>An enzyme assisted RP-RPLC approach for in-depth analysis of human liver phosphoproteome.</title>
        <authorList>
            <person name="Bian Y."/>
            <person name="Song C."/>
            <person name="Cheng K."/>
            <person name="Dong M."/>
            <person name="Wang F."/>
            <person name="Huang J."/>
            <person name="Sun D."/>
            <person name="Wang L."/>
            <person name="Ye M."/>
            <person name="Zou H."/>
        </authorList>
    </citation>
    <scope>PHOSPHORYLATION [LARGE SCALE ANALYSIS] AT THR-401</scope>
    <scope>IDENTIFICATION BY MASS SPECTROMETRY [LARGE SCALE ANALYSIS]</scope>
    <source>
        <tissue>Liver</tissue>
    </source>
</reference>
<reference key="19">
    <citation type="journal article" date="2020" name="EMBO J.">
        <title>FAM134B oligomerization drives endoplasmic reticulum membrane scission for ER-phagy.</title>
        <authorList>
            <person name="Jiang X."/>
            <person name="Wang X."/>
            <person name="Ding X."/>
            <person name="Du M."/>
            <person name="Li B."/>
            <person name="Weng X."/>
            <person name="Zhang J."/>
            <person name="Li L."/>
            <person name="Tian R."/>
            <person name="Zhu Q."/>
            <person name="Chen S."/>
            <person name="Wang L."/>
            <person name="Liu W."/>
            <person name="Fang L."/>
            <person name="Neculai D."/>
            <person name="Sun Q."/>
        </authorList>
    </citation>
    <scope>FUNCTION</scope>
    <scope>CATALYTIC ACTIVITY</scope>
</reference>
<reference key="20">
    <citation type="submission" date="2007-12" db="PDB data bank">
        <title>Crystal structure of human calcium/calmodulin-dependent protein kinase IIb isoform 1 (CAMK2B).</title>
        <authorList>
            <consortium name="Structural genomics consortium (SGC)"/>
        </authorList>
    </citation>
    <scope>X-RAY CRYSTALLOGRAPHY (2.4 ANGSTROMS) OF 11-303 IN COMPLEX WITH INHIBITOR</scope>
</reference>
<reference key="21">
    <citation type="journal article" date="2007" name="Nature">
        <title>Patterns of somatic mutation in human cancer genomes.</title>
        <authorList>
            <person name="Greenman C."/>
            <person name="Stephens P."/>
            <person name="Smith R."/>
            <person name="Dalgliesh G.L."/>
            <person name="Hunter C."/>
            <person name="Bignell G."/>
            <person name="Davies H."/>
            <person name="Teague J."/>
            <person name="Butler A."/>
            <person name="Stevens C."/>
            <person name="Edkins S."/>
            <person name="O'Meara S."/>
            <person name="Vastrik I."/>
            <person name="Schmidt E.E."/>
            <person name="Avis T."/>
            <person name="Barthorpe S."/>
            <person name="Bhamra G."/>
            <person name="Buck G."/>
            <person name="Choudhury B."/>
            <person name="Clements J."/>
            <person name="Cole J."/>
            <person name="Dicks E."/>
            <person name="Forbes S."/>
            <person name="Gray K."/>
            <person name="Halliday K."/>
            <person name="Harrison R."/>
            <person name="Hills K."/>
            <person name="Hinton J."/>
            <person name="Jenkinson A."/>
            <person name="Jones D."/>
            <person name="Menzies A."/>
            <person name="Mironenko T."/>
            <person name="Perry J."/>
            <person name="Raine K."/>
            <person name="Richardson D."/>
            <person name="Shepherd R."/>
            <person name="Small A."/>
            <person name="Tofts C."/>
            <person name="Varian J."/>
            <person name="Webb T."/>
            <person name="West S."/>
            <person name="Widaa S."/>
            <person name="Yates A."/>
            <person name="Cahill D.P."/>
            <person name="Louis D.N."/>
            <person name="Goldstraw P."/>
            <person name="Nicholson A.G."/>
            <person name="Brasseur F."/>
            <person name="Looijenga L."/>
            <person name="Weber B.L."/>
            <person name="Chiew Y.-E."/>
            <person name="DeFazio A."/>
            <person name="Greaves M.F."/>
            <person name="Green A.R."/>
            <person name="Campbell P."/>
            <person name="Birney E."/>
            <person name="Easton D.F."/>
            <person name="Chenevix-Trench G."/>
            <person name="Tan M.-H."/>
            <person name="Khoo S.K."/>
            <person name="Teh B.T."/>
            <person name="Yuen S.T."/>
            <person name="Leung S.Y."/>
            <person name="Wooster R."/>
            <person name="Futreal P.A."/>
            <person name="Stratton M.R."/>
        </authorList>
    </citation>
    <scope>VARIANTS [LARGE SCALE ANALYSIS] LEU-489 AND LYS-510</scope>
</reference>
<reference key="22">
    <citation type="journal article" date="2017" name="Am. J. Hum. Genet.">
        <title>De Novo Mutations in Protein Kinase Genes CAMK2A and CAMK2B Cause Intellectual Disability.</title>
        <authorList>
            <consortium name="Undiagnosed Diseases Network"/>
            <consortium name="GEM HUGO"/>
            <consortium name="Deciphering Developmental Disorders Study"/>
            <person name="Kuery S."/>
            <person name="van Woerden G.M."/>
            <person name="Besnard T."/>
            <person name="Proietti Onori M."/>
            <person name="Latypova X."/>
            <person name="Towne M.C."/>
            <person name="Cho M.T."/>
            <person name="Prescott T.E."/>
            <person name="Ploeg M.A."/>
            <person name="Sanders S."/>
            <person name="Stessman H.A.F."/>
            <person name="Pujol A."/>
            <person name="Distel B."/>
            <person name="Robak L.A."/>
            <person name="Bernstein J.A."/>
            <person name="Denomme-Pichon A.S."/>
            <person name="Lesca G."/>
            <person name="Sellars E.A."/>
            <person name="Berg J."/>
            <person name="Carre W."/>
            <person name="Busk O.L."/>
            <person name="van Bon B.W.M."/>
            <person name="Waugh J.L."/>
            <person name="Deardorff M."/>
            <person name="Hoganson G.E."/>
            <person name="Bosanko K.B."/>
            <person name="Johnson D.S."/>
            <person name="Dabir T."/>
            <person name="Holla O.L."/>
            <person name="Sarkar A."/>
            <person name="Tveten K."/>
            <person name="de Bellescize J."/>
            <person name="Braathen G.J."/>
            <person name="Terhal P.A."/>
            <person name="Grange D.K."/>
            <person name="van Haeringen A."/>
            <person name="Lam C."/>
            <person name="Mirzaa G."/>
            <person name="Burton J."/>
            <person name="Bhoj E.J."/>
            <person name="Douglas J."/>
            <person name="Santani A.B."/>
            <person name="Nesbitt A.I."/>
            <person name="Helbig K.L."/>
            <person name="Andrews M.V."/>
            <person name="Begtrup A."/>
            <person name="Tang S."/>
            <person name="van Gassen K.L.I."/>
            <person name="Juusola J."/>
            <person name="Foss K."/>
            <person name="Enns G.M."/>
            <person name="Moog U."/>
            <person name="Hinderhofer K."/>
            <person name="Paramasivam N."/>
            <person name="Lincoln S."/>
            <person name="Kusako B.H."/>
            <person name="Lindenbaum P."/>
            <person name="Charpentier E."/>
            <person name="Nowak C.B."/>
            <person name="Cherot E."/>
            <person name="Simonet T."/>
            <person name="Ruivenkamp C.A.L."/>
            <person name="Hahn S."/>
            <person name="Brownstein C.A."/>
            <person name="Xia F."/>
            <person name="Schmitt S."/>
            <person name="Deb W."/>
            <person name="Bonneau D."/>
            <person name="Nizon M."/>
            <person name="Quinquis D."/>
            <person name="Chelly J."/>
            <person name="Rudolf G."/>
            <person name="Sanlaville D."/>
            <person name="Parent P."/>
            <person name="Gilbert-Dussardier B."/>
            <person name="Toutain A."/>
            <person name="Sutton V.R."/>
            <person name="Thies J."/>
            <person name="Peart-Vissers L.E.L.M."/>
            <person name="Boisseau P."/>
            <person name="Vincent M."/>
            <person name="Grabrucker A.M."/>
            <person name="Dubourg C."/>
            <person name="Tan W.H."/>
            <person name="Verbeek N.E."/>
            <person name="Granzow M."/>
            <person name="Santen G.W.E."/>
            <person name="Shendure J."/>
            <person name="Isidor B."/>
            <person name="Pasquier L."/>
            <person name="Redon R."/>
            <person name="Yang Y."/>
            <person name="State M.W."/>
            <person name="Kleefstra T."/>
            <person name="Cogne B."/>
            <person name="Petrovski S."/>
            <person name="Retterer K."/>
            <person name="Eichler E.E."/>
            <person name="Rosenfeld J.A."/>
            <person name="Agrawal P.B."/>
            <person name="Bezieau S."/>
            <person name="Odent S."/>
            <person name="Elgersma Y."/>
            <person name="Mercier S."/>
        </authorList>
    </citation>
    <scope>INVOLVEMENT IN MRD54</scope>
    <scope>VARIANTS MRD54 29-ARG--GLN-666 DEL; LYS-110; LEU-139; LYS-237 AND GLU-301</scope>
    <scope>CHARACTERIZATION OF VARIANTS MRD54 LYS-110; LEU-139; LYS-237 AND GLU-301</scope>
    <scope>FUNCTION</scope>
</reference>
<reference key="23">
    <citation type="journal article" date="2018" name="Ann. Clin. Transl. Neurol.">
        <title>De novo variants in CAMK2A and CAMK2B cause neurodevelopmental disorders.</title>
        <authorList>
            <person name="Akita T."/>
            <person name="Aoto K."/>
            <person name="Kato M."/>
            <person name="Shiina M."/>
            <person name="Mutoh H."/>
            <person name="Nakashima M."/>
            <person name="Kuki I."/>
            <person name="Okazaki S."/>
            <person name="Magara S."/>
            <person name="Shiihara T."/>
            <person name="Yokochi K."/>
            <person name="Aiba K."/>
            <person name="Tohyama J."/>
            <person name="Ohba C."/>
            <person name="Miyatake S."/>
            <person name="Miyake N."/>
            <person name="Ogata K."/>
            <person name="Fukuda A."/>
            <person name="Matsumoto N."/>
            <person name="Saitsu H."/>
        </authorList>
    </citation>
    <scope>INVOLVEMENT IN MRD54</scope>
    <scope>VARIANTS MRD54 LEU-213 AND SER-284</scope>
</reference>
<keyword id="KW-0002">3D-structure</keyword>
<keyword id="KW-0009">Actin-binding</keyword>
<keyword id="KW-0025">Alternative splicing</keyword>
<keyword id="KW-0067">ATP-binding</keyword>
<keyword id="KW-0112">Calmodulin-binding</keyword>
<keyword id="KW-0963">Cytoplasm</keyword>
<keyword id="KW-0206">Cytoskeleton</keyword>
<keyword id="KW-0217">Developmental protein</keyword>
<keyword id="KW-0221">Differentiation</keyword>
<keyword id="KW-0991">Intellectual disability</keyword>
<keyword id="KW-0418">Kinase</keyword>
<keyword id="KW-0472">Membrane</keyword>
<keyword id="KW-0524">Neurogenesis</keyword>
<keyword id="KW-0547">Nucleotide-binding</keyword>
<keyword id="KW-0597">Phosphoprotein</keyword>
<keyword id="KW-1267">Proteomics identification</keyword>
<keyword id="KW-1185">Reference proteome</keyword>
<keyword id="KW-0703">Sarcoplasmic reticulum</keyword>
<keyword id="KW-0723">Serine/threonine-protein kinase</keyword>
<keyword id="KW-0770">Synapse</keyword>
<keyword id="KW-0808">Transferase</keyword>
<dbReference type="EC" id="2.7.11.17" evidence="14"/>
<dbReference type="EMBL" id="AF078803">
    <property type="protein sequence ID" value="AAD42035.1"/>
    <property type="molecule type" value="mRNA"/>
</dbReference>
<dbReference type="EMBL" id="AF081572">
    <property type="protein sequence ID" value="AAD42036.1"/>
    <property type="molecule type" value="mRNA"/>
</dbReference>
<dbReference type="EMBL" id="AF081924">
    <property type="protein sequence ID" value="AAD42037.1"/>
    <property type="molecule type" value="mRNA"/>
</dbReference>
<dbReference type="EMBL" id="AF083419">
    <property type="protein sequence ID" value="AAD42038.1"/>
    <property type="molecule type" value="mRNA"/>
</dbReference>
<dbReference type="EMBL" id="AF140350">
    <property type="protein sequence ID" value="AAD42070.1"/>
    <property type="molecule type" value="mRNA"/>
</dbReference>
<dbReference type="EMBL" id="U23460">
    <property type="protein sequence ID" value="AAC99802.1"/>
    <property type="status" value="ALT_FRAME"/>
    <property type="molecule type" value="mRNA"/>
</dbReference>
<dbReference type="EMBL" id="AF112472">
    <property type="protein sequence ID" value="AAD03744.1"/>
    <property type="molecule type" value="mRNA"/>
</dbReference>
<dbReference type="EMBL" id="AF112471">
    <property type="protein sequence ID" value="AAD03743.1"/>
    <property type="molecule type" value="mRNA"/>
</dbReference>
<dbReference type="EMBL" id="AJ252236">
    <property type="protein sequence ID" value="CAB65120.1"/>
    <property type="molecule type" value="mRNA"/>
</dbReference>
<dbReference type="EMBL" id="AJ252237">
    <property type="protein sequence ID" value="CAB65121.1"/>
    <property type="molecule type" value="mRNA"/>
</dbReference>
<dbReference type="EMBL" id="AJ252238">
    <property type="protein sequence ID" value="CAB65122.1"/>
    <property type="molecule type" value="mRNA"/>
</dbReference>
<dbReference type="EMBL" id="AK290148">
    <property type="protein sequence ID" value="BAF82837.1"/>
    <property type="molecule type" value="mRNA"/>
</dbReference>
<dbReference type="EMBL" id="AK315663">
    <property type="protein sequence ID" value="BAG38029.1"/>
    <property type="molecule type" value="mRNA"/>
</dbReference>
<dbReference type="EMBL" id="CH236960">
    <property type="protein sequence ID" value="EAL23756.1"/>
    <property type="molecule type" value="Genomic_DNA"/>
</dbReference>
<dbReference type="EMBL" id="CH236960">
    <property type="protein sequence ID" value="EAL23757.1"/>
    <property type="molecule type" value="Genomic_DNA"/>
</dbReference>
<dbReference type="EMBL" id="CH236960">
    <property type="protein sequence ID" value="EAL23758.1"/>
    <property type="molecule type" value="Genomic_DNA"/>
</dbReference>
<dbReference type="EMBL" id="CH236960">
    <property type="protein sequence ID" value="EAL23759.1"/>
    <property type="molecule type" value="Genomic_DNA"/>
</dbReference>
<dbReference type="EMBL" id="CH236960">
    <property type="protein sequence ID" value="EAL23760.1"/>
    <property type="molecule type" value="Genomic_DNA"/>
</dbReference>
<dbReference type="EMBL" id="CH236960">
    <property type="protein sequence ID" value="EAL23761.1"/>
    <property type="molecule type" value="Genomic_DNA"/>
</dbReference>
<dbReference type="EMBL" id="CH236960">
    <property type="protein sequence ID" value="EAL23762.1"/>
    <property type="molecule type" value="Genomic_DNA"/>
</dbReference>
<dbReference type="EMBL" id="BC019070">
    <property type="protein sequence ID" value="AAH19070.1"/>
    <property type="molecule type" value="mRNA"/>
</dbReference>
<dbReference type="EMBL" id="U50358">
    <property type="protein sequence ID" value="AAB16863.1"/>
    <property type="molecule type" value="mRNA"/>
</dbReference>
<dbReference type="CCDS" id="CCDS43573.1">
    <molecule id="Q13554-8"/>
</dbReference>
<dbReference type="CCDS" id="CCDS5483.1">
    <molecule id="Q13554-1"/>
</dbReference>
<dbReference type="CCDS" id="CCDS5484.1">
    <molecule id="Q13554-2"/>
</dbReference>
<dbReference type="CCDS" id="CCDS5485.1">
    <molecule id="Q13554-5"/>
</dbReference>
<dbReference type="CCDS" id="CCDS5486.1">
    <molecule id="Q13554-3"/>
</dbReference>
<dbReference type="CCDS" id="CCDS5487.1">
    <molecule id="Q13554-6"/>
</dbReference>
<dbReference type="CCDS" id="CCDS5488.1">
    <molecule id="Q13554-4"/>
</dbReference>
<dbReference type="CCDS" id="CCDS5489.1">
    <molecule id="Q13554-7"/>
</dbReference>
<dbReference type="RefSeq" id="NP_001211.3">
    <molecule id="Q13554-1"/>
    <property type="nucleotide sequence ID" value="NM_001220.4"/>
</dbReference>
<dbReference type="RefSeq" id="NP_001280099.1">
    <molecule id="Q13554-2"/>
    <property type="nucleotide sequence ID" value="NM_001293170.2"/>
</dbReference>
<dbReference type="RefSeq" id="NP_742075.1">
    <molecule id="Q13554-2"/>
    <property type="nucleotide sequence ID" value="NM_172078.3"/>
</dbReference>
<dbReference type="RefSeq" id="NP_742076.1">
    <molecule id="Q13554-5"/>
    <property type="nucleotide sequence ID" value="NM_172079.3"/>
</dbReference>
<dbReference type="RefSeq" id="NP_742077.1">
    <molecule id="Q13554-8"/>
    <property type="nucleotide sequence ID" value="NM_172080.3"/>
</dbReference>
<dbReference type="RefSeq" id="NP_742078.1">
    <molecule id="Q13554-3"/>
    <property type="nucleotide sequence ID" value="NM_172081.3"/>
</dbReference>
<dbReference type="RefSeq" id="NP_742079.1">
    <molecule id="Q13554-6"/>
    <property type="nucleotide sequence ID" value="NM_172082.3"/>
</dbReference>
<dbReference type="RefSeq" id="NP_742080.1">
    <molecule id="Q13554-4"/>
    <property type="nucleotide sequence ID" value="NM_172083.3"/>
</dbReference>
<dbReference type="RefSeq" id="NP_742081.1">
    <molecule id="Q13554-7"/>
    <property type="nucleotide sequence ID" value="NM_172084.3"/>
</dbReference>
<dbReference type="PDB" id="3BHH">
    <property type="method" value="X-ray"/>
    <property type="resolution" value="2.40 A"/>
    <property type="chains" value="A/B/C/D=11-303"/>
</dbReference>
<dbReference type="PDB" id="7URW">
    <property type="method" value="X-ray"/>
    <property type="resolution" value="3.11 A"/>
    <property type="chains" value="A/B/C/D/E/F/G=534-666"/>
</dbReference>
<dbReference type="PDB" id="7URY">
    <property type="method" value="X-ray"/>
    <property type="resolution" value="2.64 A"/>
    <property type="chains" value="A/B/C/D/E/F/G=534-666"/>
</dbReference>
<dbReference type="PDB" id="7URZ">
    <property type="method" value="X-ray"/>
    <property type="resolution" value="3.45 A"/>
    <property type="chains" value="A/B/C/G=534-666"/>
</dbReference>
<dbReference type="PDBsum" id="3BHH"/>
<dbReference type="PDBsum" id="7URW"/>
<dbReference type="PDBsum" id="7URY"/>
<dbReference type="PDBsum" id="7URZ"/>
<dbReference type="SMR" id="Q13554"/>
<dbReference type="BioGRID" id="107266">
    <property type="interactions" value="183"/>
</dbReference>
<dbReference type="DIP" id="DIP-39770N"/>
<dbReference type="FunCoup" id="Q13554">
    <property type="interactions" value="2064"/>
</dbReference>
<dbReference type="IntAct" id="Q13554">
    <property type="interactions" value="127"/>
</dbReference>
<dbReference type="MINT" id="Q13554"/>
<dbReference type="STRING" id="9606.ENSP00000379098"/>
<dbReference type="BindingDB" id="Q13554"/>
<dbReference type="ChEMBL" id="CHEMBL4121"/>
<dbReference type="DrugBank" id="DB07168">
    <property type="generic name" value="[4-({4-[(5-cyclopropyl-1H-pyrazol-3-yl)amino]-6-(methylamino)pyrimidin-2-yl}amino)phenyl]acetonitrile"/>
</dbReference>
<dbReference type="DrugBank" id="DB12010">
    <property type="generic name" value="Fostamatinib"/>
</dbReference>
<dbReference type="DrugBank" id="DB12571">
    <property type="generic name" value="Rimacalib"/>
</dbReference>
<dbReference type="DrugCentral" id="Q13554"/>
<dbReference type="GuidetoPHARMACOLOGY" id="1556"/>
<dbReference type="GlyCosmos" id="Q13554">
    <property type="glycosylation" value="2 sites, 1 glycan"/>
</dbReference>
<dbReference type="GlyGen" id="Q13554">
    <property type="glycosylation" value="7 sites, 1 O-linked glycan (5 sites)"/>
</dbReference>
<dbReference type="iPTMnet" id="Q13554"/>
<dbReference type="PhosphoSitePlus" id="Q13554"/>
<dbReference type="SwissPalm" id="Q13554"/>
<dbReference type="BioMuta" id="CAMK2B"/>
<dbReference type="DMDM" id="334302890"/>
<dbReference type="jPOST" id="Q13554"/>
<dbReference type="MassIVE" id="Q13554"/>
<dbReference type="PaxDb" id="9606-ENSP00000379098"/>
<dbReference type="PeptideAtlas" id="Q13554"/>
<dbReference type="ProteomicsDB" id="59530">
    <molecule id="Q13554-1"/>
</dbReference>
<dbReference type="ProteomicsDB" id="59531">
    <molecule id="Q13554-2"/>
</dbReference>
<dbReference type="ProteomicsDB" id="59532">
    <molecule id="Q13554-3"/>
</dbReference>
<dbReference type="ProteomicsDB" id="59533">
    <molecule id="Q13554-4"/>
</dbReference>
<dbReference type="ProteomicsDB" id="59534">
    <molecule id="Q13554-5"/>
</dbReference>
<dbReference type="ProteomicsDB" id="59535">
    <molecule id="Q13554-6"/>
</dbReference>
<dbReference type="ProteomicsDB" id="59536">
    <molecule id="Q13554-7"/>
</dbReference>
<dbReference type="ProteomicsDB" id="59537">
    <molecule id="Q13554-8"/>
</dbReference>
<dbReference type="Pumba" id="Q13554"/>
<dbReference type="Antibodypedia" id="3482">
    <property type="antibodies" value="547 antibodies from 38 providers"/>
</dbReference>
<dbReference type="DNASU" id="816"/>
<dbReference type="Ensembl" id="ENST00000258682.10">
    <molecule id="Q13554-8"/>
    <property type="protein sequence ID" value="ENSP00000258682.6"/>
    <property type="gene ID" value="ENSG00000058404.21"/>
</dbReference>
<dbReference type="Ensembl" id="ENST00000346990.8">
    <molecule id="Q13554-7"/>
    <property type="protein sequence ID" value="ENSP00000326518.5"/>
    <property type="gene ID" value="ENSG00000058404.21"/>
</dbReference>
<dbReference type="Ensembl" id="ENST00000347193.8">
    <molecule id="Q13554-6"/>
    <property type="protein sequence ID" value="ENSP00000326544.6"/>
    <property type="gene ID" value="ENSG00000058404.21"/>
</dbReference>
<dbReference type="Ensembl" id="ENST00000350811.7">
    <molecule id="Q13554-2"/>
    <property type="protein sequence ID" value="ENSP00000326375.5"/>
    <property type="gene ID" value="ENSG00000058404.21"/>
</dbReference>
<dbReference type="Ensembl" id="ENST00000353625.8">
    <molecule id="Q13554-4"/>
    <property type="protein sequence ID" value="ENSP00000326427.5"/>
    <property type="gene ID" value="ENSG00000058404.21"/>
</dbReference>
<dbReference type="Ensembl" id="ENST00000358707.7">
    <molecule id="Q13554-3"/>
    <property type="protein sequence ID" value="ENSP00000351542.3"/>
    <property type="gene ID" value="ENSG00000058404.21"/>
</dbReference>
<dbReference type="Ensembl" id="ENST00000395747.6">
    <molecule id="Q13554-5"/>
    <property type="protein sequence ID" value="ENSP00000379096.2"/>
    <property type="gene ID" value="ENSG00000058404.21"/>
</dbReference>
<dbReference type="Ensembl" id="ENST00000395749.7">
    <molecule id="Q13554-1"/>
    <property type="protein sequence ID" value="ENSP00000379098.2"/>
    <property type="gene ID" value="ENSG00000058404.21"/>
</dbReference>
<dbReference type="Ensembl" id="ENST00000440254.6">
    <molecule id="Q13554-2"/>
    <property type="protein sequence ID" value="ENSP00000397937.2"/>
    <property type="gene ID" value="ENSG00000058404.21"/>
</dbReference>
<dbReference type="Ensembl" id="ENST00000700285.1">
    <molecule id="Q13554-2"/>
    <property type="protein sequence ID" value="ENSP00000514918.1"/>
    <property type="gene ID" value="ENSG00000058404.21"/>
</dbReference>
<dbReference type="GeneID" id="816"/>
<dbReference type="KEGG" id="hsa:816"/>
<dbReference type="MANE-Select" id="ENST00000395749.7">
    <property type="protein sequence ID" value="ENSP00000379098.2"/>
    <property type="RefSeq nucleotide sequence ID" value="NM_001220.5"/>
    <property type="RefSeq protein sequence ID" value="NP_001211.3"/>
</dbReference>
<dbReference type="UCSC" id="uc003tkp.3">
    <molecule id="Q13554-1"/>
    <property type="organism name" value="human"/>
</dbReference>
<dbReference type="AGR" id="HGNC:1461"/>
<dbReference type="CTD" id="816"/>
<dbReference type="DisGeNET" id="816"/>
<dbReference type="GeneCards" id="CAMK2B"/>
<dbReference type="HGNC" id="HGNC:1461">
    <property type="gene designation" value="CAMK2B"/>
</dbReference>
<dbReference type="HPA" id="ENSG00000058404">
    <property type="expression patterns" value="Group enriched (brain, heart muscle, skeletal muscle, tongue)"/>
</dbReference>
<dbReference type="MalaCards" id="CAMK2B"/>
<dbReference type="MIM" id="607707">
    <property type="type" value="gene"/>
</dbReference>
<dbReference type="MIM" id="617799">
    <property type="type" value="phenotype"/>
</dbReference>
<dbReference type="neXtProt" id="NX_Q13554"/>
<dbReference type="OpenTargets" id="ENSG00000058404"/>
<dbReference type="Orphanet" id="178469">
    <property type="disease" value="Autosomal dominant non-syndromic intellectual disability"/>
</dbReference>
<dbReference type="PharmGKB" id="PA91"/>
<dbReference type="VEuPathDB" id="HostDB:ENSG00000058404"/>
<dbReference type="eggNOG" id="KOG0033">
    <property type="taxonomic scope" value="Eukaryota"/>
</dbReference>
<dbReference type="GeneTree" id="ENSGT00940000158973"/>
<dbReference type="HOGENOM" id="CLU_000288_71_0_1"/>
<dbReference type="InParanoid" id="Q13554"/>
<dbReference type="OMA" id="MEFHRFY"/>
<dbReference type="OrthoDB" id="336747at2759"/>
<dbReference type="PAN-GO" id="Q13554">
    <property type="GO annotations" value="4 GO annotations based on evolutionary models"/>
</dbReference>
<dbReference type="PhylomeDB" id="Q13554"/>
<dbReference type="TreeFam" id="TF315229"/>
<dbReference type="BRENDA" id="2.7.11.17">
    <property type="organism ID" value="2681"/>
</dbReference>
<dbReference type="PathwayCommons" id="Q13554"/>
<dbReference type="Reactome" id="R-HSA-111932">
    <property type="pathway name" value="CaMK IV-mediated phosphorylation of CREB"/>
</dbReference>
<dbReference type="Reactome" id="R-HSA-3371571">
    <property type="pathway name" value="HSF1-dependent transactivation"/>
</dbReference>
<dbReference type="Reactome" id="R-HSA-399719">
    <property type="pathway name" value="Trafficking of AMPA receptors"/>
</dbReference>
<dbReference type="Reactome" id="R-HSA-438066">
    <property type="pathway name" value="Unblocking of NMDA receptors, glutamate binding and activation"/>
</dbReference>
<dbReference type="Reactome" id="R-HSA-442729">
    <property type="pathway name" value="CREB1 phosphorylation through the activation of CaMKII/CaMKK/CaMKIV cascasde"/>
</dbReference>
<dbReference type="Reactome" id="R-HSA-442982">
    <property type="pathway name" value="Ras activation upon Ca2+ influx through NMDA receptor"/>
</dbReference>
<dbReference type="Reactome" id="R-HSA-5576892">
    <property type="pathway name" value="Phase 0 - rapid depolarisation"/>
</dbReference>
<dbReference type="Reactome" id="R-HSA-5578775">
    <property type="pathway name" value="Ion homeostasis"/>
</dbReference>
<dbReference type="Reactome" id="R-HSA-5673000">
    <property type="pathway name" value="RAF activation"/>
</dbReference>
<dbReference type="Reactome" id="R-HSA-5673001">
    <property type="pathway name" value="RAF/MAP kinase cascade"/>
</dbReference>
<dbReference type="Reactome" id="R-HSA-6802946">
    <property type="pathway name" value="Signaling by moderate kinase activity BRAF mutants"/>
</dbReference>
<dbReference type="Reactome" id="R-HSA-6802952">
    <property type="pathway name" value="Signaling by BRAF and RAF1 fusions"/>
</dbReference>
<dbReference type="Reactome" id="R-HSA-6802955">
    <property type="pathway name" value="Paradoxical activation of RAF signaling by kinase inactive BRAF"/>
</dbReference>
<dbReference type="Reactome" id="R-HSA-877300">
    <property type="pathway name" value="Interferon gamma signaling"/>
</dbReference>
<dbReference type="Reactome" id="R-HSA-9022692">
    <property type="pathway name" value="Regulation of MECP2 expression and activity"/>
</dbReference>
<dbReference type="Reactome" id="R-HSA-936837">
    <property type="pathway name" value="Ion transport by P-type ATPases"/>
</dbReference>
<dbReference type="Reactome" id="R-HSA-9609736">
    <property type="pathway name" value="Assembly and cell surface presentation of NMDA receptors"/>
</dbReference>
<dbReference type="Reactome" id="R-HSA-9617324">
    <property type="pathway name" value="Negative regulation of NMDA receptor-mediated neuronal transmission"/>
</dbReference>
<dbReference type="Reactome" id="R-HSA-9620244">
    <property type="pathway name" value="Long-term potentiation"/>
</dbReference>
<dbReference type="Reactome" id="R-HSA-9649948">
    <property type="pathway name" value="Signaling downstream of RAS mutants"/>
</dbReference>
<dbReference type="Reactome" id="R-HSA-9656223">
    <property type="pathway name" value="Signaling by RAF1 mutants"/>
</dbReference>
<dbReference type="SignaLink" id="Q13554"/>
<dbReference type="SIGNOR" id="Q13554"/>
<dbReference type="BioGRID-ORCS" id="816">
    <property type="hits" value="18 hits in 1181 CRISPR screens"/>
</dbReference>
<dbReference type="CD-CODE" id="8C2F96ED">
    <property type="entry name" value="Centrosome"/>
</dbReference>
<dbReference type="CD-CODE" id="FB4E32DD">
    <property type="entry name" value="Presynaptic clusters and postsynaptic densities"/>
</dbReference>
<dbReference type="ChiTaRS" id="CAMK2B">
    <property type="organism name" value="human"/>
</dbReference>
<dbReference type="EvolutionaryTrace" id="Q13554"/>
<dbReference type="GeneWiki" id="CAMK2B"/>
<dbReference type="GenomeRNAi" id="816"/>
<dbReference type="Pharos" id="Q13554">
    <property type="development level" value="Tchem"/>
</dbReference>
<dbReference type="PRO" id="PR:Q13554"/>
<dbReference type="Proteomes" id="UP000005640">
    <property type="component" value="Chromosome 7"/>
</dbReference>
<dbReference type="RNAct" id="Q13554">
    <property type="molecule type" value="protein"/>
</dbReference>
<dbReference type="Bgee" id="ENSG00000058404">
    <property type="expression patterns" value="Expressed in cerebellar cortex and 171 other cell types or tissues"/>
</dbReference>
<dbReference type="ExpressionAtlas" id="Q13554">
    <property type="expression patterns" value="baseline and differential"/>
</dbReference>
<dbReference type="GO" id="GO:0005954">
    <property type="term" value="C:calcium- and calmodulin-dependent protein kinase complex"/>
    <property type="evidence" value="ECO:0000314"/>
    <property type="project" value="BHF-UCL"/>
</dbReference>
<dbReference type="GO" id="GO:0005813">
    <property type="term" value="C:centrosome"/>
    <property type="evidence" value="ECO:0007669"/>
    <property type="project" value="UniProtKB-SubCell"/>
</dbReference>
<dbReference type="GO" id="GO:0005737">
    <property type="term" value="C:cytoplasm"/>
    <property type="evidence" value="ECO:0000318"/>
    <property type="project" value="GO_Central"/>
</dbReference>
<dbReference type="GO" id="GO:0005829">
    <property type="term" value="C:cytosol"/>
    <property type="evidence" value="ECO:0000304"/>
    <property type="project" value="Reactome"/>
</dbReference>
<dbReference type="GO" id="GO:0030666">
    <property type="term" value="C:endocytic vesicle membrane"/>
    <property type="evidence" value="ECO:0000304"/>
    <property type="project" value="Reactome"/>
</dbReference>
<dbReference type="GO" id="GO:0043005">
    <property type="term" value="C:neuron projection"/>
    <property type="evidence" value="ECO:0000318"/>
    <property type="project" value="GO_Central"/>
</dbReference>
<dbReference type="GO" id="GO:0005654">
    <property type="term" value="C:nucleoplasm"/>
    <property type="evidence" value="ECO:0000304"/>
    <property type="project" value="Reactome"/>
</dbReference>
<dbReference type="GO" id="GO:0014069">
    <property type="term" value="C:postsynaptic density"/>
    <property type="evidence" value="ECO:0000318"/>
    <property type="project" value="GO_Central"/>
</dbReference>
<dbReference type="GO" id="GO:0033017">
    <property type="term" value="C:sarcoplasmic reticulum membrane"/>
    <property type="evidence" value="ECO:0007669"/>
    <property type="project" value="UniProtKB-SubCell"/>
</dbReference>
<dbReference type="GO" id="GO:0003779">
    <property type="term" value="F:actin binding"/>
    <property type="evidence" value="ECO:0007669"/>
    <property type="project" value="UniProtKB-KW"/>
</dbReference>
<dbReference type="GO" id="GO:0005524">
    <property type="term" value="F:ATP binding"/>
    <property type="evidence" value="ECO:0007669"/>
    <property type="project" value="UniProtKB-KW"/>
</dbReference>
<dbReference type="GO" id="GO:0004683">
    <property type="term" value="F:calcium/calmodulin-dependent protein kinase activity"/>
    <property type="evidence" value="ECO:0000314"/>
    <property type="project" value="UniProtKB"/>
</dbReference>
<dbReference type="GO" id="GO:0005516">
    <property type="term" value="F:calmodulin binding"/>
    <property type="evidence" value="ECO:0000318"/>
    <property type="project" value="GO_Central"/>
</dbReference>
<dbReference type="GO" id="GO:0042802">
    <property type="term" value="F:identical protein binding"/>
    <property type="evidence" value="ECO:0000353"/>
    <property type="project" value="IntAct"/>
</dbReference>
<dbReference type="GO" id="GO:0042803">
    <property type="term" value="F:protein homodimerization activity"/>
    <property type="evidence" value="ECO:0000353"/>
    <property type="project" value="BHF-UCL"/>
</dbReference>
<dbReference type="GO" id="GO:0106310">
    <property type="term" value="F:protein serine kinase activity"/>
    <property type="evidence" value="ECO:0007669"/>
    <property type="project" value="RHEA"/>
</dbReference>
<dbReference type="GO" id="GO:0030154">
    <property type="term" value="P:cell differentiation"/>
    <property type="evidence" value="ECO:0007669"/>
    <property type="project" value="UniProtKB-KW"/>
</dbReference>
<dbReference type="GO" id="GO:0060291">
    <property type="term" value="P:long-term synaptic potentiation"/>
    <property type="evidence" value="ECO:0000304"/>
    <property type="project" value="BHF-UCL"/>
</dbReference>
<dbReference type="GO" id="GO:0007399">
    <property type="term" value="P:nervous system development"/>
    <property type="evidence" value="ECO:0007669"/>
    <property type="project" value="UniProtKB-KW"/>
</dbReference>
<dbReference type="GO" id="GO:0061003">
    <property type="term" value="P:positive regulation of dendritic spine morphogenesis"/>
    <property type="evidence" value="ECO:0000250"/>
    <property type="project" value="UniProtKB"/>
</dbReference>
<dbReference type="GO" id="GO:0010976">
    <property type="term" value="P:positive regulation of neuron projection development"/>
    <property type="evidence" value="ECO:0000250"/>
    <property type="project" value="UniProtKB"/>
</dbReference>
<dbReference type="GO" id="GO:0090129">
    <property type="term" value="P:positive regulation of synapse maturation"/>
    <property type="evidence" value="ECO:0000250"/>
    <property type="project" value="UniProtKB"/>
</dbReference>
<dbReference type="GO" id="GO:0046777">
    <property type="term" value="P:protein autophosphorylation"/>
    <property type="evidence" value="ECO:0000314"/>
    <property type="project" value="UniProtKB"/>
</dbReference>
<dbReference type="GO" id="GO:0006468">
    <property type="term" value="P:protein phosphorylation"/>
    <property type="evidence" value="ECO:0000304"/>
    <property type="project" value="ProtInc"/>
</dbReference>
<dbReference type="GO" id="GO:0051924">
    <property type="term" value="P:regulation of calcium ion transport"/>
    <property type="evidence" value="ECO:0000304"/>
    <property type="project" value="UniProtKB"/>
</dbReference>
<dbReference type="GO" id="GO:0060998">
    <property type="term" value="P:regulation of dendritic spine development"/>
    <property type="evidence" value="ECO:0000304"/>
    <property type="project" value="UniProtKB"/>
</dbReference>
<dbReference type="GO" id="GO:0048169">
    <property type="term" value="P:regulation of long-term neuronal synaptic plasticity"/>
    <property type="evidence" value="ECO:0000304"/>
    <property type="project" value="UniProtKB"/>
</dbReference>
<dbReference type="GO" id="GO:2001222">
    <property type="term" value="P:regulation of neuron migration"/>
    <property type="evidence" value="ECO:0000315"/>
    <property type="project" value="UniProtKB"/>
</dbReference>
<dbReference type="GO" id="GO:0048168">
    <property type="term" value="P:regulation of neuronal synaptic plasticity"/>
    <property type="evidence" value="ECO:0000318"/>
    <property type="project" value="GO_Central"/>
</dbReference>
<dbReference type="GO" id="GO:1903076">
    <property type="term" value="P:regulation of protein localization to plasma membrane"/>
    <property type="evidence" value="ECO:0000318"/>
    <property type="project" value="GO_Central"/>
</dbReference>
<dbReference type="GO" id="GO:0014733">
    <property type="term" value="P:regulation of skeletal muscle adaptation"/>
    <property type="evidence" value="ECO:0000304"/>
    <property type="project" value="UniProtKB"/>
</dbReference>
<dbReference type="GO" id="GO:0051823">
    <property type="term" value="P:regulation of synapse structural plasticity"/>
    <property type="evidence" value="ECO:0000304"/>
    <property type="project" value="UniProtKB"/>
</dbReference>
<dbReference type="GO" id="GO:0007165">
    <property type="term" value="P:signal transduction"/>
    <property type="evidence" value="ECO:0000304"/>
    <property type="project" value="ProtInc"/>
</dbReference>
<dbReference type="CDD" id="cd14086">
    <property type="entry name" value="STKc_CaMKII"/>
    <property type="match status" value="1"/>
</dbReference>
<dbReference type="FunFam" id="1.10.510.10:FF:000001">
    <property type="entry name" value="Calcium/calmodulin-dependent protein kinase type II subunit delta"/>
    <property type="match status" value="1"/>
</dbReference>
<dbReference type="FunFam" id="3.30.200.20:FF:000002">
    <property type="entry name" value="Calcium/calmodulin-dependent protein kinase type II subunit delta isoform 2"/>
    <property type="match status" value="1"/>
</dbReference>
<dbReference type="FunFam" id="3.10.450.50:FF:000001">
    <property type="entry name" value="calcium/calmodulin-dependent protein kinase type II subunit gamma isoform X1"/>
    <property type="match status" value="1"/>
</dbReference>
<dbReference type="Gene3D" id="3.10.450.50">
    <property type="match status" value="1"/>
</dbReference>
<dbReference type="Gene3D" id="6.10.140.620">
    <property type="match status" value="1"/>
</dbReference>
<dbReference type="Gene3D" id="3.30.200.20">
    <property type="entry name" value="Phosphorylase Kinase, domain 1"/>
    <property type="match status" value="1"/>
</dbReference>
<dbReference type="Gene3D" id="1.10.510.10">
    <property type="entry name" value="Transferase(Phosphotransferase) domain 1"/>
    <property type="match status" value="1"/>
</dbReference>
<dbReference type="InterPro" id="IPR013543">
    <property type="entry name" value="Ca/CaM-dep_prot_kinase-assoc"/>
</dbReference>
<dbReference type="InterPro" id="IPR011009">
    <property type="entry name" value="Kinase-like_dom_sf"/>
</dbReference>
<dbReference type="InterPro" id="IPR032710">
    <property type="entry name" value="NTF2-like_dom_sf"/>
</dbReference>
<dbReference type="InterPro" id="IPR000719">
    <property type="entry name" value="Prot_kinase_dom"/>
</dbReference>
<dbReference type="InterPro" id="IPR017441">
    <property type="entry name" value="Protein_kinase_ATP_BS"/>
</dbReference>
<dbReference type="InterPro" id="IPR008271">
    <property type="entry name" value="Ser/Thr_kinase_AS"/>
</dbReference>
<dbReference type="PANTHER" id="PTHR24347">
    <property type="entry name" value="SERINE/THREONINE-PROTEIN KINASE"/>
    <property type="match status" value="1"/>
</dbReference>
<dbReference type="Pfam" id="PF08332">
    <property type="entry name" value="CaMKII_AD"/>
    <property type="match status" value="1"/>
</dbReference>
<dbReference type="Pfam" id="PF00069">
    <property type="entry name" value="Pkinase"/>
    <property type="match status" value="1"/>
</dbReference>
<dbReference type="SMART" id="SM00220">
    <property type="entry name" value="S_TKc"/>
    <property type="match status" value="1"/>
</dbReference>
<dbReference type="SUPFAM" id="SSF54427">
    <property type="entry name" value="NTF2-like"/>
    <property type="match status" value="1"/>
</dbReference>
<dbReference type="SUPFAM" id="SSF56112">
    <property type="entry name" value="Protein kinase-like (PK-like)"/>
    <property type="match status" value="1"/>
</dbReference>
<dbReference type="PROSITE" id="PS00107">
    <property type="entry name" value="PROTEIN_KINASE_ATP"/>
    <property type="match status" value="1"/>
</dbReference>
<dbReference type="PROSITE" id="PS50011">
    <property type="entry name" value="PROTEIN_KINASE_DOM"/>
    <property type="match status" value="1"/>
</dbReference>
<dbReference type="PROSITE" id="PS00108">
    <property type="entry name" value="PROTEIN_KINASE_ST"/>
    <property type="match status" value="1"/>
</dbReference>
<sequence length="666" mass="72678">MATTVTCTRFTDEYQLYEDIGKGAFSVVRRCVKLCTGHEYAAKIINTKKLSARDHQKLEREARICRLLKHSNIVRLHDSISEEGFHYLVFDLVTGGELFEDIVAREYYSEADASHCIQQILEAVLHCHQMGVVHRDLKPENLLLASKCKGAAVKLADFGLAIEVQGDQQAWFGFAGTPGYLSPEVLRKEAYGKPVDIWACGVILYILLVGYPPFWDEDQHKLYQQIKAGAYDFPSPEWDTVTPEAKNLINQMLTINPAKRITAHEALKHPWVCQRSTVASMMHRQETVECLKKFNARRKLKGAILTTMLATRNFSVGRQTTAPATMSTAASGTTMGLVEQAKSLLNKKADGVKPQTNSTKNSAAATSPKGTLPPAALEPQTTVIHNPVDGIKESSDSANTTIEDEDAKAPRVPDILSSVRRGSGAPEAEGPLPCPSPAPFSPLPAPSPRISDILNSVRRGSGTPEAEGPLSAGPPPCLSPALLGPLSSPSPRISDILNSVRRGSGTPEAEGPSPVGPPPCPSPTIPGPLPTPSRKQEIIKTTEQLIEAVNNGDFEAYAKICDPGLTSFEPEALGNLVEGMDFHRFYFENLLAKNSKPIHTTILNPHVHVIGEDAACIAYIRLTQYIDGQGRPRTSQSEETRVWHRRDGKWQNVHFHCSGAPVAPLQ</sequence>
<protein>
    <recommendedName>
        <fullName>Calcium/calmodulin-dependent protein kinase type II subunit beta</fullName>
        <shortName>CaM kinase II subunit beta</shortName>
        <shortName>CaMK-II subunit beta</shortName>
        <ecNumber evidence="14">2.7.11.17</ecNumber>
    </recommendedName>
</protein>
<comment type="function">
    <text evidence="2 9 12 14">Calcium/calmodulin-dependent protein kinase that functions autonomously after Ca(2+)/calmodulin-binding and autophosphorylation, and is involved in dendritic spine and synapse formation, neuronal plasticity and regulation of sarcoplasmic reticulum Ca(2+) transport in skeletal muscle (PubMed:16690701). In neurons, plays an essential structural role in the reorganization of the actin cytoskeleton during plasticity by binding and bundling actin filaments in a kinase-independent manner. This structural function is required for correct targeting of CaMK2A, which acts downstream of NMDAR to promote dendritic spine and synapse formation and maintain synaptic plasticity which enables long-term potentiation (LTP) and hippocampus-dependent learning. In developing hippocampal neurons, promotes arborization of the dendritic tree and in mature neurons, promotes dendritic remodeling. Also regulates the migration of developing neurons (PubMed:29100089). Participates in the modulation of skeletal muscle function in response to exercise (PubMed:16690701). In slow-twitch muscles, is involved in regulation of sarcoplasmic reticulum (SR) Ca(2+) transport and in fast-twitch muscle participates in the control of Ca(2+) release from the SR through phosphorylation of triadin, a ryanodine receptor-coupling factor, and phospholamban (PLN/PLB), an endogenous inhibitor of SERCA2A/ATP2A2. In response to interferon-gamma (IFN-gamma) stimulation, catalyzes phosphorylation of STAT1, stimulating the JAK-STAT signaling pathway (By similarity). Phosphorylates reticulophagy regulator RETREG1 at 'Ser-151' under endoplasmic reticulum stress conditions which enhances RETREG1 oligomerization and its membrane scission and reticulophagy activity (PubMed:31930741).</text>
</comment>
<comment type="catalytic activity">
    <reaction evidence="14">
        <text>L-seryl-[protein] + ATP = O-phospho-L-seryl-[protein] + ADP + H(+)</text>
        <dbReference type="Rhea" id="RHEA:17989"/>
        <dbReference type="Rhea" id="RHEA-COMP:9863"/>
        <dbReference type="Rhea" id="RHEA-COMP:11604"/>
        <dbReference type="ChEBI" id="CHEBI:15378"/>
        <dbReference type="ChEBI" id="CHEBI:29999"/>
        <dbReference type="ChEBI" id="CHEBI:30616"/>
        <dbReference type="ChEBI" id="CHEBI:83421"/>
        <dbReference type="ChEBI" id="CHEBI:456216"/>
        <dbReference type="EC" id="2.7.11.17"/>
    </reaction>
</comment>
<comment type="catalytic activity">
    <reaction>
        <text>L-threonyl-[protein] + ATP = O-phospho-L-threonyl-[protein] + ADP + H(+)</text>
        <dbReference type="Rhea" id="RHEA:46608"/>
        <dbReference type="Rhea" id="RHEA-COMP:11060"/>
        <dbReference type="Rhea" id="RHEA-COMP:11605"/>
        <dbReference type="ChEBI" id="CHEBI:15378"/>
        <dbReference type="ChEBI" id="CHEBI:30013"/>
        <dbReference type="ChEBI" id="CHEBI:30616"/>
        <dbReference type="ChEBI" id="CHEBI:61977"/>
        <dbReference type="ChEBI" id="CHEBI:456216"/>
        <dbReference type="EC" id="2.7.11.17"/>
    </reaction>
</comment>
<comment type="activity regulation">
    <text evidence="7">Activated by Ca(2+)/calmodulin. Binding of calmodulin results in conformational change that relieves intrasteric autoinhibition and allows autophosphorylation of Thr-287 which turns the kinase in a constitutively active form and confers to the kinase a Ca(2+)-independent activity.</text>
</comment>
<comment type="subunit">
    <text evidence="2 3 7 8 15">CAMK2 is composed of 4 different chains: alpha (CAMK2A), beta (CAMK2B), gamma (CAMK2G), and delta (CAMK2D). The different isoforms assemble into homo- or heteromultimeric holoenzymes composed of 12 subunits with two hexameric rings stacked one on top of the other (PubMed:14722083, Ref.20). Interacts with SYNGAP1 and CAMK2N2 (By similarity). Interacts with MPDZ (PubMed:15312654). Interacts with FOXO3 (By similarity). Interacts (when in a kinase inactive state not associated with calmodulin) with ARC; leading to target ARC to inactive synapses (By similarity). Interacts with CAMK2N1; this interaction requires CAMK2B activation by Ca(2+) (By similarity).</text>
</comment>
<comment type="interaction">
    <interactant intactId="EBI-1058722">
        <id>Q13554</id>
    </interactant>
    <interactant intactId="EBI-948905">
        <id>O00154</id>
        <label>ACOT7</label>
    </interactant>
    <organismsDiffer>false</organismsDiffer>
    <experiments>3</experiments>
</comment>
<comment type="interaction">
    <interactant intactId="EBI-1058722">
        <id>Q13554</id>
    </interactant>
    <interactant intactId="EBI-5917279">
        <id>Q2VPB7</id>
        <label>AP5B1</label>
    </interactant>
    <organismsDiffer>false</organismsDiffer>
    <experiments>4</experiments>
</comment>
<comment type="interaction">
    <interactant intactId="EBI-1058722">
        <id>Q13554</id>
    </interactant>
    <interactant intactId="EBI-397435">
        <id>P62158</id>
        <label>CALM3</label>
    </interactant>
    <organismsDiffer>false</organismsDiffer>
    <experiments>2</experiments>
</comment>
<comment type="interaction">
    <interactant intactId="EBI-1058722">
        <id>Q13554</id>
    </interactant>
    <interactant intactId="EBI-1383687">
        <id>Q9UQM7</id>
        <label>CAMK2A</label>
    </interactant>
    <organismsDiffer>false</organismsDiffer>
    <experiments>5</experiments>
</comment>
<comment type="interaction">
    <interactant intactId="EBI-1058722">
        <id>Q13554</id>
    </interactant>
    <interactant intactId="EBI-1058722">
        <id>Q13554</id>
        <label>CAMK2B</label>
    </interactant>
    <organismsDiffer>false</organismsDiffer>
    <experiments>2</experiments>
</comment>
<comment type="interaction">
    <interactant intactId="EBI-1058722">
        <id>Q13554</id>
    </interactant>
    <interactant intactId="EBI-351018">
        <id>Q13557</id>
        <label>CAMK2D</label>
    </interactant>
    <organismsDiffer>false</organismsDiffer>
    <experiments>5</experiments>
</comment>
<comment type="interaction">
    <interactant intactId="EBI-1058722">
        <id>Q13554</id>
    </interactant>
    <interactant intactId="EBI-10264767">
        <id>Q8N0U1</id>
        <label>FAM171A2</label>
    </interactant>
    <organismsDiffer>false</organismsDiffer>
    <experiments>3</experiments>
</comment>
<comment type="interaction">
    <interactant intactId="EBI-1058722">
        <id>Q13554</id>
    </interactant>
    <interactant intactId="EBI-10217483">
        <id>P60412</id>
        <label>KRTAP10-11</label>
    </interactant>
    <organismsDiffer>false</organismsDiffer>
    <experiments>3</experiments>
</comment>
<comment type="interaction">
    <interactant intactId="EBI-1058722">
        <id>Q13554</id>
    </interactant>
    <interactant intactId="EBI-1048945">
        <id>Q3LI72</id>
        <label>KRTAP19-5</label>
    </interactant>
    <organismsDiffer>false</organismsDiffer>
    <experiments>3</experiments>
</comment>
<comment type="interaction">
    <interactant intactId="EBI-1058722">
        <id>Q13554</id>
    </interactant>
    <interactant intactId="EBI-10241353">
        <id>Q3SYF9</id>
        <label>KRTAP19-7</label>
    </interactant>
    <organismsDiffer>false</organismsDiffer>
    <experiments>3</experiments>
</comment>
<comment type="interaction">
    <interactant intactId="EBI-1058722">
        <id>Q13554</id>
    </interactant>
    <interactant intactId="EBI-77889">
        <id>Q9UI95</id>
        <label>MAD2L2</label>
    </interactant>
    <organismsDiffer>false</organismsDiffer>
    <experiments>3</experiments>
</comment>
<comment type="interaction">
    <interactant intactId="EBI-1058722">
        <id>Q13554</id>
    </interactant>
    <interactant intactId="EBI-394640">
        <id>Q9BUE0</id>
        <label>MED18</label>
    </interactant>
    <organismsDiffer>false</organismsDiffer>
    <experiments>3</experiments>
</comment>
<comment type="interaction">
    <interactant intactId="EBI-1058722">
        <id>Q13554</id>
    </interactant>
    <interactant intactId="EBI-399246">
        <id>Q9UBU8</id>
        <label>MORF4L1</label>
    </interactant>
    <organismsDiffer>false</organismsDiffer>
    <experiments>3</experiments>
</comment>
<comment type="interaction">
    <interactant intactId="EBI-1058722">
        <id>Q13554</id>
    </interactant>
    <interactant intactId="EBI-10288852">
        <id>Q9UBU8-2</id>
        <label>MORF4L1</label>
    </interactant>
    <organismsDiffer>false</organismsDiffer>
    <experiments>3</experiments>
</comment>
<comment type="interaction">
    <interactant intactId="EBI-1058722">
        <id>Q13554</id>
    </interactant>
    <interactant intactId="EBI-5453723">
        <id>Q9Y3B7</id>
        <label>MRPL11</label>
    </interactant>
    <organismsDiffer>false</organismsDiffer>
    <experiments>3</experiments>
</comment>
<comment type="interaction">
    <interactant intactId="EBI-1058722">
        <id>Q13554</id>
    </interactant>
    <interactant intactId="EBI-740559">
        <id>Q93100</id>
        <label>PHKB</label>
    </interactant>
    <organismsDiffer>false</organismsDiffer>
    <experiments>3</experiments>
</comment>
<comment type="interaction">
    <interactant intactId="EBI-1058722">
        <id>Q13554</id>
    </interactant>
    <interactant intactId="EBI-366525">
        <id>Q969H6</id>
        <label>POP5</label>
    </interactant>
    <organismsDiffer>false</organismsDiffer>
    <experiments>3</experiments>
</comment>
<comment type="interaction">
    <interactant intactId="EBI-1058722">
        <id>Q13554</id>
    </interactant>
    <interactant intactId="EBI-750871">
        <id>P61225</id>
        <label>RAP2B</label>
    </interactant>
    <organismsDiffer>false</organismsDiffer>
    <experiments>3</experiments>
</comment>
<comment type="interaction">
    <interactant intactId="EBI-1058722">
        <id>Q13554</id>
    </interactant>
    <interactant intactId="EBI-746056">
        <id>O43251</id>
        <label>RBFOX2</label>
    </interactant>
    <organismsDiffer>false</organismsDiffer>
    <experiments>3</experiments>
</comment>
<comment type="interaction">
    <interactant intactId="EBI-1058722">
        <id>Q13554</id>
    </interactant>
    <interactant intactId="EBI-740322">
        <id>Q93062</id>
        <label>RBPMS</label>
    </interactant>
    <organismsDiffer>false</organismsDiffer>
    <experiments>3</experiments>
</comment>
<comment type="interaction">
    <interactant intactId="EBI-1058722">
        <id>Q13554</id>
    </interactant>
    <interactant intactId="EBI-354380">
        <id>P62913</id>
        <label>RPL11</label>
    </interactant>
    <organismsDiffer>false</organismsDiffer>
    <experiments>3</experiments>
</comment>
<comment type="interaction">
    <interactant intactId="EBI-1058722">
        <id>Q13554</id>
    </interactant>
    <interactant intactId="EBI-9089805">
        <id>Q9NTN9-3</id>
        <label>SEMA4G</label>
    </interactant>
    <organismsDiffer>false</organismsDiffer>
    <experiments>3</experiments>
</comment>
<comment type="interaction">
    <interactant intactId="EBI-1058722">
        <id>Q13554</id>
    </interactant>
    <interactant intactId="EBI-10248098">
        <id>Q5W111</id>
        <label>SPRYD7</label>
    </interactant>
    <organismsDiffer>false</organismsDiffer>
    <experiments>3</experiments>
</comment>
<comment type="interaction">
    <interactant intactId="EBI-1058722">
        <id>Q13554</id>
    </interactant>
    <interactant intactId="EBI-9526213">
        <id>Q8N0Z6</id>
        <label>TTC5</label>
    </interactant>
    <organismsDiffer>false</organismsDiffer>
    <experiments>3</experiments>
</comment>
<comment type="interaction">
    <interactant intactId="EBI-1058722">
        <id>Q13554</id>
    </interactant>
    <interactant intactId="EBI-10175974">
        <id>B3KWQ7</id>
    </interactant>
    <organismsDiffer>false</organismsDiffer>
    <experiments>3</experiments>
</comment>
<comment type="interaction">
    <interactant intactId="EBI-11523526">
        <id>Q13554-3</id>
    </interactant>
    <interactant intactId="EBI-12007918">
        <id>O00154-4</id>
        <label>ACOT7</label>
    </interactant>
    <organismsDiffer>false</organismsDiffer>
    <experiments>3</experiments>
</comment>
<comment type="interaction">
    <interactant intactId="EBI-11523526">
        <id>Q13554-3</id>
    </interactant>
    <interactant intactId="EBI-2117357">
        <id>P15289</id>
        <label>ARSA</label>
    </interactant>
    <organismsDiffer>false</organismsDiffer>
    <experiments>3</experiments>
</comment>
<comment type="interaction">
    <interactant intactId="EBI-11523526">
        <id>Q13554-3</id>
    </interactant>
    <interactant intactId="EBI-1383687">
        <id>Q9UQM7</id>
        <label>CAMK2A</label>
    </interactant>
    <organismsDiffer>false</organismsDiffer>
    <experiments>3</experiments>
</comment>
<comment type="interaction">
    <interactant intactId="EBI-11523526">
        <id>Q13554-3</id>
    </interactant>
    <interactant intactId="EBI-11534483">
        <id>Q13557-8</id>
        <label>CAMK2D</label>
    </interactant>
    <organismsDiffer>false</organismsDiffer>
    <experiments>4</experiments>
</comment>
<comment type="interaction">
    <interactant intactId="EBI-11523526">
        <id>Q13554-3</id>
    </interactant>
    <interactant intactId="EBI-12020154">
        <id>Q13555-5</id>
        <label>CAMK2G</label>
    </interactant>
    <organismsDiffer>false</organismsDiffer>
    <experiments>3</experiments>
</comment>
<comment type="interaction">
    <interactant intactId="EBI-11523526">
        <id>Q13554-3</id>
    </interactant>
    <interactant intactId="EBI-350645">
        <id>Q9NUG4</id>
        <label>CCM2L</label>
    </interactant>
    <organismsDiffer>false</organismsDiffer>
    <experiments>3</experiments>
</comment>
<comment type="interaction">
    <interactant intactId="EBI-11523526">
        <id>Q13554-3</id>
    </interactant>
    <interactant intactId="EBI-295634">
        <id>Q16543</id>
        <label>CDC37</label>
    </interactant>
    <organismsDiffer>false</organismsDiffer>
    <experiments>3</experiments>
</comment>
<comment type="interaction">
    <interactant intactId="EBI-11523526">
        <id>Q13554-3</id>
    </interactant>
    <interactant intactId="EBI-6660325">
        <id>Q6P1R4</id>
        <label>DUS1L</label>
    </interactant>
    <organismsDiffer>false</organismsDiffer>
    <experiments>3</experiments>
</comment>
<comment type="interaction">
    <interactant intactId="EBI-11523526">
        <id>Q13554-3</id>
    </interactant>
    <interactant intactId="EBI-9996498">
        <id>O43790</id>
        <label>KRT86</label>
    </interactant>
    <organismsDiffer>false</organismsDiffer>
    <experiments>3</experiments>
</comment>
<comment type="interaction">
    <interactant intactId="EBI-11523526">
        <id>Q13554-3</id>
    </interactant>
    <interactant intactId="EBI-11959885">
        <id>Q07627</id>
        <label>KRTAP1-1</label>
    </interactant>
    <organismsDiffer>false</organismsDiffer>
    <experiments>3</experiments>
</comment>
<comment type="interaction">
    <interactant intactId="EBI-11523526">
        <id>Q13554-3</id>
    </interactant>
    <interactant intactId="EBI-12020132">
        <id>Q7Z4W3</id>
        <label>KRTAP19-3</label>
    </interactant>
    <organismsDiffer>false</organismsDiffer>
    <experiments>3</experiments>
</comment>
<comment type="interaction">
    <interactant intactId="EBI-11523526">
        <id>Q13554-3</id>
    </interactant>
    <interactant intactId="EBI-11962084">
        <id>Q3LI66</id>
        <label>KRTAP6-2</label>
    </interactant>
    <organismsDiffer>false</organismsDiffer>
    <experiments>3</experiments>
</comment>
<comment type="interaction">
    <interactant intactId="EBI-11523526">
        <id>Q13554-3</id>
    </interactant>
    <interactant intactId="EBI-22311199">
        <id>Q3LI67</id>
        <label>KRTAP6-3</label>
    </interactant>
    <organismsDiffer>false</organismsDiffer>
    <experiments>3</experiments>
</comment>
<comment type="interaction">
    <interactant intactId="EBI-11523526">
        <id>Q13554-3</id>
    </interactant>
    <interactant intactId="EBI-16439278">
        <id>Q6FHY5</id>
        <label>MEOX2</label>
    </interactant>
    <organismsDiffer>false</organismsDiffer>
    <experiments>3</experiments>
</comment>
<comment type="interaction">
    <interactant intactId="EBI-11523526">
        <id>Q13554-3</id>
    </interactant>
    <interactant intactId="EBI-10288852">
        <id>Q9UBU8-2</id>
        <label>MORF4L1</label>
    </interactant>
    <organismsDiffer>false</organismsDiffer>
    <experiments>3</experiments>
</comment>
<comment type="interaction">
    <interactant intactId="EBI-11523526">
        <id>Q13554-3</id>
    </interactant>
    <interactant intactId="EBI-399257">
        <id>Q15014</id>
        <label>MORF4L2</label>
    </interactant>
    <organismsDiffer>false</organismsDiffer>
    <experiments>3</experiments>
</comment>
<comment type="interaction">
    <interactant intactId="EBI-11523526">
        <id>Q13554-3</id>
    </interactant>
    <interactant intactId="EBI-5453723">
        <id>Q9Y3B7</id>
        <label>MRPL11</label>
    </interactant>
    <organismsDiffer>false</organismsDiffer>
    <experiments>3</experiments>
</comment>
<comment type="interaction">
    <interactant intactId="EBI-11523526">
        <id>Q13554-3</id>
    </interactant>
    <interactant intactId="EBI-1045072">
        <id>Q96T60</id>
        <label>PNKP</label>
    </interactant>
    <organismsDiffer>false</organismsDiffer>
    <experiments>3</experiments>
</comment>
<comment type="interaction">
    <interactant intactId="EBI-11523526">
        <id>Q13554-3</id>
    </interactant>
    <interactant intactId="EBI-5452779">
        <id>Q9BUI4</id>
        <label>POLR3C</label>
    </interactant>
    <organismsDiffer>false</organismsDiffer>
    <experiments>3</experiments>
</comment>
<comment type="interaction">
    <interactant intactId="EBI-11523526">
        <id>Q13554-3</id>
    </interactant>
    <interactant intactId="EBI-750871">
        <id>P61225</id>
        <label>RAP2B</label>
    </interactant>
    <organismsDiffer>false</organismsDiffer>
    <experiments>3</experiments>
</comment>
<comment type="interaction">
    <interactant intactId="EBI-11523526">
        <id>Q13554-3</id>
    </interactant>
    <interactant intactId="EBI-2340927">
        <id>P78317</id>
        <label>RNF4</label>
    </interactant>
    <organismsDiffer>false</organismsDiffer>
    <experiments>3</experiments>
</comment>
<comment type="interaction">
    <interactant intactId="EBI-11523526">
        <id>Q13554-3</id>
    </interactant>
    <interactant intactId="EBI-12076664">
        <id>O14787-2</id>
        <label>TNPO2</label>
    </interactant>
    <organismsDiffer>false</organismsDiffer>
    <experiments>3</experiments>
</comment>
<comment type="interaction">
    <interactant intactId="EBI-11523526">
        <id>Q13554-3</id>
    </interactant>
    <interactant intactId="EBI-1042571">
        <id>Q9Y5L0</id>
        <label>TNPO3</label>
    </interactant>
    <organismsDiffer>false</organismsDiffer>
    <experiments>3</experiments>
</comment>
<comment type="interaction">
    <interactant intactId="EBI-11523526">
        <id>Q13554-3</id>
    </interactant>
    <interactant intactId="EBI-9526213">
        <id>Q8N0Z6</id>
        <label>TTC5</label>
    </interactant>
    <organismsDiffer>false</organismsDiffer>
    <experiments>3</experiments>
</comment>
<comment type="interaction">
    <interactant intactId="EBI-11523526">
        <id>Q13554-3</id>
    </interactant>
    <interactant intactId="EBI-355765">
        <id>P26640</id>
        <label>VARS1</label>
    </interactant>
    <organismsDiffer>false</organismsDiffer>
    <experiments>3</experiments>
</comment>
<comment type="interaction">
    <interactant intactId="EBI-11523526">
        <id>Q13554-3</id>
    </interactant>
    <interactant intactId="EBI-10188476">
        <id>A0A0C4DGF1</id>
        <label>ZBTB32</label>
    </interactant>
    <organismsDiffer>false</organismsDiffer>
    <experiments>3</experiments>
</comment>
<comment type="interaction">
    <interactant intactId="EBI-11523526">
        <id>Q13554-3</id>
    </interactant>
    <interactant intactId="EBI-17634549">
        <id>Q9UJ78-2</id>
        <label>ZMYM5</label>
    </interactant>
    <organismsDiffer>false</organismsDiffer>
    <experiments>3</experiments>
</comment>
<comment type="subcellular location">
    <subcellularLocation>
        <location evidence="11">Cytoplasm</location>
        <location evidence="11">Cytoskeleton</location>
    </subcellularLocation>
    <subcellularLocation>
        <location evidence="1">Cytoplasm</location>
        <location evidence="1">Cytoskeleton</location>
        <location evidence="1">Microtubule organizing center</location>
        <location evidence="1">Centrosome</location>
    </subcellularLocation>
    <subcellularLocation>
        <location evidence="11">Sarcoplasmic reticulum membrane</location>
        <topology evidence="11">Peripheral membrane protein</topology>
        <orientation evidence="11">Cytoplasmic side</orientation>
    </subcellularLocation>
    <subcellularLocation>
        <location evidence="2">Synapse</location>
    </subcellularLocation>
    <text>In slow-twitch muscle, evenly distributed between longitudinal SR and junctional SR.</text>
</comment>
<comment type="alternative products">
    <event type="alternative splicing"/>
    <isoform>
        <id>Q13554-1</id>
        <name>4</name>
        <sequence type="displayed"/>
    </isoform>
    <isoform>
        <id>Q13554-2</id>
        <name>1</name>
        <name>Beta</name>
        <sequence type="described" ref="VSP_004776"/>
    </isoform>
    <isoform>
        <id>Q13554-3</id>
        <name>2</name>
        <name>Beta1</name>
        <name>Beta'E</name>
        <sequence type="described" ref="VSP_004770 VSP_004771 VSP_004775 VSP_004776"/>
    </isoform>
    <isoform>
        <id>Q13554-4</id>
        <name>3</name>
        <name>Beta2</name>
        <sequence type="described" ref="VSP_004770 VSP_004771 VSP_004774 VSP_004776"/>
    </isoform>
    <isoform>
        <id>Q13554-5</id>
        <name>5</name>
        <name>Beta4</name>
        <name>BetaE</name>
        <sequence type="described" ref="VSP_004770 VSP_004771 VSP_004776"/>
    </isoform>
    <isoform>
        <id>Q13554-6</id>
        <name>6</name>
        <name>Beta6</name>
        <sequence type="described" ref="VSP_004773 VSP_004776 VSP_004777"/>
    </isoform>
    <isoform>
        <id>Q13554-7</id>
        <name>7</name>
        <name>Beta7</name>
        <sequence type="described" ref="VSP_004770 VSP_004772"/>
    </isoform>
    <isoform>
        <id>Q13554-8</id>
        <name>8</name>
        <sequence type="described" ref="VSP_041219 VSP_004776"/>
    </isoform>
    <text>The variable region of the CAMK2B protein is encoded by at least 7 exons (V1 to V7). Alternative splicing within this region gives rise to CAMK2B isoforms.</text>
</comment>
<comment type="tissue specificity">
    <text evidence="9">Widely expressed. Expressed in adult and fetal brain. Expression is slightly lower in fetal brain. Expressed in skeletal muscle.</text>
</comment>
<comment type="induction">
    <text evidence="9">Activity is induced in skeletal muscle during exercise.</text>
</comment>
<comment type="domain">
    <text>The CAMK2 protein kinases contain a unique C-terminal subunit association domain responsible for oligomerization.</text>
</comment>
<comment type="PTM">
    <text evidence="7 9">Autophosphorylation of Thr-287 following activation by Ca(2+)/calmodulin. Phosphorylation of Thr-287 locks the kinase into an activated state.</text>
</comment>
<comment type="disease" evidence="12 13">
    <disease id="DI-05155">
        <name>Intellectual developmental disorder, autosomal dominant 54</name>
        <acronym>MRD54</acronym>
        <description>A disorder characterized by significantly below average general intellectual functioning associated with impairments in adaptive behavior and manifested during the developmental period.</description>
        <dbReference type="MIM" id="617799"/>
    </disease>
    <text>The disease is caused by variants affecting the gene represented in this entry.</text>
</comment>
<comment type="similarity">
    <text evidence="22">Belongs to the protein kinase superfamily. CAMK Ser/Thr protein kinase family. CaMK subfamily.</text>
</comment>
<comment type="sequence caution" evidence="22">
    <conflict type="frameshift">
        <sequence resource="EMBL-CDS" id="AAC99802"/>
    </conflict>
</comment>
<feature type="chain" id="PRO_0000086096" description="Calcium/calmodulin-dependent protein kinase type II subunit beta">
    <location>
        <begin position="1"/>
        <end position="666"/>
    </location>
</feature>
<feature type="domain" description="Protein kinase" evidence="4">
    <location>
        <begin position="14"/>
        <end position="272"/>
    </location>
</feature>
<feature type="region of interest" description="Autoinhibitory domain" evidence="1">
    <location>
        <begin position="283"/>
        <end position="292"/>
    </location>
</feature>
<feature type="region of interest" description="Calmodulin-binding">
    <location>
        <begin position="291"/>
        <end position="301"/>
    </location>
</feature>
<feature type="region of interest" description="Disordered" evidence="6">
    <location>
        <begin position="349"/>
        <end position="534"/>
    </location>
</feature>
<feature type="compositionally biased region" description="Polar residues" evidence="6">
    <location>
        <begin position="354"/>
        <end position="369"/>
    </location>
</feature>
<feature type="compositionally biased region" description="Pro residues" evidence="6">
    <location>
        <begin position="432"/>
        <end position="447"/>
    </location>
</feature>
<feature type="compositionally biased region" description="Low complexity" evidence="6">
    <location>
        <begin position="479"/>
        <end position="491"/>
    </location>
</feature>
<feature type="compositionally biased region" description="Pro residues" evidence="6">
    <location>
        <begin position="514"/>
        <end position="531"/>
    </location>
</feature>
<feature type="active site" description="Proton acceptor" evidence="4 5">
    <location>
        <position position="136"/>
    </location>
</feature>
<feature type="binding site" evidence="4">
    <location>
        <begin position="20"/>
        <end position="28"/>
    </location>
    <ligand>
        <name>ATP</name>
        <dbReference type="ChEBI" id="CHEBI:30616"/>
    </ligand>
</feature>
<feature type="binding site" evidence="4">
    <location>
        <position position="43"/>
    </location>
    <ligand>
        <name>ATP</name>
        <dbReference type="ChEBI" id="CHEBI:30616"/>
    </ligand>
</feature>
<feature type="modified residue" description="Phosphotyrosine" evidence="3">
    <location>
        <position position="17"/>
    </location>
</feature>
<feature type="modified residue" description="Phosphothreonine; by autocatalysis" evidence="9">
    <location>
        <position position="287"/>
    </location>
</feature>
<feature type="modified residue" description="Phosphothreonine; by autocatalysis" evidence="1">
    <location>
        <position position="306"/>
    </location>
</feature>
<feature type="modified residue" description="Phosphothreonine; by autocatalysis" evidence="1">
    <location>
        <position position="307"/>
    </location>
</feature>
<feature type="modified residue" description="Phosphoserine" evidence="2">
    <location>
        <position position="367"/>
    </location>
</feature>
<feature type="modified residue" description="Phosphoserine" evidence="3">
    <location>
        <position position="394"/>
    </location>
</feature>
<feature type="modified residue" description="Phosphoserine" evidence="2">
    <location>
        <position position="397"/>
    </location>
</feature>
<feature type="modified residue" description="Phosphothreonine" evidence="3">
    <location>
        <position position="400"/>
    </location>
</feature>
<feature type="modified residue" description="Phosphothreonine" evidence="23">
    <location>
        <position position="401"/>
    </location>
</feature>
<feature type="splice variant" id="VSP_041219" description="In isoform 8." evidence="22">
    <location>
        <begin position="316"/>
        <end position="340"/>
    </location>
</feature>
<feature type="splice variant" id="VSP_004770" description="In isoform 2, isoform 3, isoform 5 and isoform 7." evidence="16 17 18 19 20 21">
    <original>V</original>
    <variation>A</variation>
    <location>
        <position position="316"/>
    </location>
</feature>
<feature type="splice variant" id="VSP_004772" description="In isoform 7." evidence="17">
    <location>
        <begin position="317"/>
        <end position="533"/>
    </location>
</feature>
<feature type="splice variant" id="VSP_004771" description="In isoform 2, isoform 3 and isoform 5." evidence="16 17 18 19 20 21">
    <location>
        <begin position="317"/>
        <end position="340"/>
    </location>
</feature>
<feature type="splice variant" id="VSP_004774" description="In isoform 3." evidence="16">
    <location>
        <begin position="354"/>
        <end position="392"/>
    </location>
</feature>
<feature type="splice variant" id="VSP_004773" description="In isoform 6." evidence="17">
    <location>
        <begin position="354"/>
        <end position="377"/>
    </location>
</feature>
<feature type="splice variant" id="VSP_004775" description="In isoform 2." evidence="16 17 18 19 20">
    <location>
        <begin position="379"/>
        <end position="393"/>
    </location>
</feature>
<feature type="splice variant" id="VSP_004776" description="In isoform 1, isoform 2, isoform 3, isoform 5, isoform 6 and isoform 8." evidence="16 17 18 19 20 21">
    <location>
        <begin position="410"/>
        <end position="533"/>
    </location>
</feature>
<feature type="splice variant" id="VSP_004777" description="In isoform 6." evidence="17">
    <location>
        <begin position="559"/>
        <end position="584"/>
    </location>
</feature>
<feature type="sequence variant" id="VAR_080588" description="In MRD54." evidence="12">
    <location>
        <begin position="29"/>
        <end position="666"/>
    </location>
</feature>
<feature type="sequence variant" id="VAR_080589" description="In MRD54; decreased protein abundance; increased autophosphorylation; decreased neuronal migration; dbSNP:rs1554402092." evidence="12">
    <original>E</original>
    <variation>K</variation>
    <location>
        <position position="110"/>
    </location>
</feature>
<feature type="sequence variant" id="VAR_080590" description="In MRD54; decreased protein abundance; increased autophosphorylation; decreased neuronal migration; dbSNP:rs1554389088." evidence="12">
    <original>P</original>
    <variation>L</variation>
    <location>
        <position position="139"/>
    </location>
</feature>
<feature type="sequence variant" id="VAR_081162" description="In MRD54; dbSNP:rs1554387293." evidence="13">
    <original>P</original>
    <variation>L</variation>
    <location>
        <position position="213"/>
    </location>
</feature>
<feature type="sequence variant" id="VAR_080591" description="In MRD54; no effect on protein abundance; increased autophosphorylation; decreased neuronal migration; dbSNP:rs1554386687." evidence="12">
    <original>E</original>
    <variation>K</variation>
    <location>
        <position position="237"/>
    </location>
</feature>
<feature type="sequence variant" id="VAR_081163" description="In MRD54; dbSNP:rs1554385203." evidence="13">
    <original>R</original>
    <variation>S</variation>
    <location>
        <position position="284"/>
    </location>
</feature>
<feature type="sequence variant" id="VAR_080592" description="In MRD54; no effect on protein abundance; loss of autophosphorylation; changed function in neuronal migration; dbSNP:rs1554385111." evidence="12">
    <original>K</original>
    <variation>E</variation>
    <location>
        <position position="301"/>
    </location>
</feature>
<feature type="sequence variant" id="VAR_045581" description="In a colorectal adenocarcinoma sample; somatic mutation; dbSNP:rs555460132." evidence="10">
    <original>P</original>
    <variation>L</variation>
    <location>
        <position position="489"/>
    </location>
</feature>
<feature type="sequence variant" id="VAR_045582" description="In dbSNP:rs35452727." evidence="10">
    <original>E</original>
    <variation>K</variation>
    <location>
        <position position="510"/>
    </location>
</feature>
<feature type="sequence conflict" description="In Ref. 3; AAD03744/AAD03743." evidence="22" ref="3">
    <original>L</original>
    <variation>V</variation>
    <location>
        <position position="68"/>
    </location>
</feature>
<feature type="sequence conflict" description="In Ref. 8; AAB16863." evidence="22" ref="8">
    <original>K</original>
    <variation>N</variation>
    <location>
        <position position="535"/>
    </location>
</feature>
<feature type="strand" evidence="24">
    <location>
        <begin position="14"/>
        <end position="19"/>
    </location>
</feature>
<feature type="strand" evidence="24">
    <location>
        <begin position="27"/>
        <end position="33"/>
    </location>
</feature>
<feature type="turn" evidence="24">
    <location>
        <begin position="34"/>
        <end position="36"/>
    </location>
</feature>
<feature type="strand" evidence="24">
    <location>
        <begin position="39"/>
        <end position="46"/>
    </location>
</feature>
<feature type="helix" evidence="24">
    <location>
        <begin position="52"/>
        <end position="67"/>
    </location>
</feature>
<feature type="strand" evidence="24">
    <location>
        <begin position="76"/>
        <end position="81"/>
    </location>
</feature>
<feature type="strand" evidence="24">
    <location>
        <begin position="83"/>
        <end position="91"/>
    </location>
</feature>
<feature type="strand" evidence="24">
    <location>
        <begin position="95"/>
        <end position="97"/>
    </location>
</feature>
<feature type="helix" evidence="24">
    <location>
        <begin position="98"/>
        <end position="102"/>
    </location>
</feature>
<feature type="helix" evidence="24">
    <location>
        <begin position="110"/>
        <end position="129"/>
    </location>
</feature>
<feature type="helix" evidence="24">
    <location>
        <begin position="139"/>
        <end position="141"/>
    </location>
</feature>
<feature type="strand" evidence="24">
    <location>
        <begin position="142"/>
        <end position="145"/>
    </location>
</feature>
<feature type="strand" evidence="24">
    <location>
        <begin position="153"/>
        <end position="155"/>
    </location>
</feature>
<feature type="helix" evidence="24">
    <location>
        <begin position="178"/>
        <end position="180"/>
    </location>
</feature>
<feature type="helix" evidence="24">
    <location>
        <begin position="183"/>
        <end position="186"/>
    </location>
</feature>
<feature type="helix" evidence="24">
    <location>
        <begin position="194"/>
        <end position="209"/>
    </location>
</feature>
<feature type="helix" evidence="24">
    <location>
        <begin position="219"/>
        <end position="228"/>
    </location>
</feature>
<feature type="turn" evidence="24">
    <location>
        <begin position="235"/>
        <end position="238"/>
    </location>
</feature>
<feature type="strand" evidence="24">
    <location>
        <begin position="239"/>
        <end position="241"/>
    </location>
</feature>
<feature type="helix" evidence="24">
    <location>
        <begin position="243"/>
        <end position="252"/>
    </location>
</feature>
<feature type="turn" evidence="24">
    <location>
        <begin position="257"/>
        <end position="259"/>
    </location>
</feature>
<feature type="helix" evidence="24">
    <location>
        <begin position="263"/>
        <end position="266"/>
    </location>
</feature>
<feature type="helix" evidence="24">
    <location>
        <begin position="270"/>
        <end position="273"/>
    </location>
</feature>
<feature type="helix" evidence="24">
    <location>
        <begin position="275"/>
        <end position="278"/>
    </location>
</feature>
<feature type="helix" evidence="24">
    <location>
        <begin position="285"/>
        <end position="298"/>
    </location>
</feature>
<feature type="helix" evidence="25">
    <location>
        <begin position="534"/>
        <end position="551"/>
    </location>
</feature>
<feature type="helix" evidence="25">
    <location>
        <begin position="554"/>
        <end position="560"/>
    </location>
</feature>
<feature type="strand" evidence="25">
    <location>
        <begin position="561"/>
        <end position="568"/>
    </location>
</feature>
<feature type="helix" evidence="25">
    <location>
        <begin position="570"/>
        <end position="572"/>
    </location>
</feature>
<feature type="strand" evidence="25">
    <location>
        <begin position="577"/>
        <end position="580"/>
    </location>
</feature>
<feature type="helix" evidence="25">
    <location>
        <begin position="581"/>
        <end position="588"/>
    </location>
</feature>
<feature type="helix" evidence="25">
    <location>
        <begin position="592"/>
        <end position="594"/>
    </location>
</feature>
<feature type="strand" evidence="25">
    <location>
        <begin position="598"/>
        <end position="609"/>
    </location>
</feature>
<feature type="strand" evidence="25">
    <location>
        <begin position="611"/>
        <end position="626"/>
    </location>
</feature>
<feature type="strand" evidence="25">
    <location>
        <begin position="632"/>
        <end position="646"/>
    </location>
</feature>
<feature type="strand" evidence="25">
    <location>
        <begin position="649"/>
        <end position="659"/>
    </location>
</feature>
<feature type="sequence conflict" description="In Ref. 1; AAD42036." evidence="22" ref="1">
    <original>A</original>
    <variation>V</variation>
    <location sequence="Q13554-3">
        <position position="316"/>
    </location>
</feature>